<feature type="signal peptide" evidence="36">
    <location>
        <begin position="1"/>
        <end position="24"/>
    </location>
</feature>
<feature type="chain" id="PRO_0000030843" description="Angiogenin" evidence="36 37">
    <location>
        <begin position="25"/>
        <end position="147"/>
    </location>
</feature>
<feature type="short sequence motif" description="Nucleolar localization signal" evidence="49">
    <location>
        <begin position="55"/>
        <end position="59"/>
    </location>
</feature>
<feature type="active site" description="Proton acceptor" evidence="3 47 60">
    <location>
        <position position="37"/>
    </location>
</feature>
<feature type="active site" description="Proton donor" evidence="3 47 60">
    <location>
        <position position="138"/>
    </location>
</feature>
<feature type="binding site" evidence="47">
    <location>
        <position position="45"/>
    </location>
    <ligand>
        <name>tRNA</name>
        <dbReference type="ChEBI" id="CHEBI:17843"/>
    </ligand>
</feature>
<feature type="binding site" evidence="47">
    <location>
        <position position="46"/>
    </location>
    <ligand>
        <name>tRNA</name>
        <dbReference type="ChEBI" id="CHEBI:17843"/>
    </ligand>
</feature>
<feature type="binding site" evidence="47">
    <location>
        <position position="105"/>
    </location>
    <ligand>
        <name>tRNA</name>
        <dbReference type="ChEBI" id="CHEBI:17843"/>
    </ligand>
</feature>
<feature type="binding site" evidence="47">
    <location>
        <position position="127"/>
    </location>
    <ligand>
        <name>tRNA</name>
        <dbReference type="ChEBI" id="CHEBI:17843"/>
    </ligand>
</feature>
<feature type="modified residue" description="Pyrrolidone carboxylic acid" evidence="36">
    <location>
        <position position="25"/>
    </location>
</feature>
<feature type="disulfide bond" evidence="3 4 7 9 35 36 46 47 51 57 58 60 65 66 67 68 69 70 71 72 73 74 75 76 77 78 79 80 81 82 83 84 85 86 87 88 89 90 91 92 93 94 95 96 97 98 99 100 101 102 103 104 105 106 107 108 109 110 111 112 113 114">
    <location>
        <begin position="50"/>
        <end position="105"/>
    </location>
</feature>
<feature type="disulfide bond" evidence="3 4 7 9 35 36 46 47 51 57 58 60 65 66 67 68 69 70 71 72 73 74 75 76 77 78 79 80 81 82 83 84 85 86 87 88 89 90 91 92 93 94 95 96 97 98 99 100 101 102 103 104 105 106 107 108 109 110 111 112 113 114">
    <location>
        <begin position="63"/>
        <end position="116"/>
    </location>
</feature>
<feature type="disulfide bond" evidence="3 4 7 9 35 36 46 47 51 57 58 60 65 66 67 68 69 70 71 72 73 74 75 76 77 78 79 80 81 82 83 84 85 86 87 88 89 90 91 92 93 94 95 96 97 98 99 100 101 102 103 104 105 106 107 108 109 110 111 112 113 114">
    <location>
        <begin position="81"/>
        <end position="131"/>
    </location>
</feature>
<feature type="sequence variant" id="VAR_089762" description="In ALS9." evidence="21 24">
    <original>F</original>
    <variation>L</variation>
    <location>
        <position position="12"/>
    </location>
</feature>
<feature type="sequence variant" id="VAR_044145" description="In ALS9." evidence="16 24">
    <original>F</original>
    <variation>S</variation>
    <location>
        <position position="12"/>
    </location>
</feature>
<feature type="sequence variant" id="VAR_089763" description="Found in a patient with Parkinson disease; uncertain significance." evidence="24">
    <original>V</original>
    <variation>A</variation>
    <location>
        <position position="13"/>
    </location>
</feature>
<feature type="sequence variant" id="VAR_089764" description="In ALS9; uncertain significance." evidence="24">
    <original>G</original>
    <variation>D</variation>
    <location>
        <position position="15"/>
    </location>
</feature>
<feature type="sequence variant" id="VAR_089765" description="Found in a patient with Parkinson disease; uncertain significance." evidence="24">
    <original>G</original>
    <variation>D</variation>
    <location>
        <position position="17"/>
    </location>
</feature>
<feature type="sequence variant" id="VAR_089766" description="In ALS9; uncertain significance." evidence="24">
    <original>P</original>
    <variation>Q</variation>
    <location>
        <position position="20"/>
    </location>
</feature>
<feature type="sequence variant" id="VAR_044146" description="In ALS9." evidence="14 16 24">
    <original>P</original>
    <variation>S</variation>
    <location>
        <position position="20"/>
    </location>
</feature>
<feature type="sequence variant" id="VAR_044147" description="In ALS9; reduced ribonucleolytic activity; low angiogenic activity; reduced mitogenic activity; wild type far-UV CD spectra; dbSNP:rs121909535." evidence="12 15 24">
    <original>Q</original>
    <variation>L</variation>
    <location>
        <position position="36"/>
    </location>
</feature>
<feature type="sequence variant" id="VAR_089767" description="Found in a patient with Parkinson disease; uncertain significance." evidence="24">
    <original>H</original>
    <variation>R</variation>
    <location>
        <position position="37"/>
    </location>
</feature>
<feature type="sequence variant" id="VAR_073021" description="In ALS9; dbSNP:rs1032422334." evidence="26">
    <original>Y</original>
    <variation>H</variation>
    <location>
        <position position="38"/>
    </location>
</feature>
<feature type="sequence variant" id="VAR_044148" description="In ALS9; reduced ribonucleolytic activity; dbSNP:rs121909537." evidence="12 15 18 24">
    <original>K</original>
    <variation>E</variation>
    <location>
        <position position="41"/>
    </location>
</feature>
<feature type="sequence variant" id="VAR_044149" description="In ALS9; loss of angiogenic activity; reduced ribonucleolytic activity; retains nuclear translocation; dbSNP:rs121909536." evidence="12 14 15 26">
    <original>K</original>
    <variation>I</variation>
    <location>
        <position position="41"/>
    </location>
</feature>
<feature type="sequence variant" id="VAR_073022" description="In ALS9; homodimerization is similar to wild-type; localization in the nucleus is similar to the wild-type; strongly reduces ribonucleolytic activity; dbSNP:rs1440927797." evidence="26 32">
    <original>D</original>
    <variation>G</variation>
    <location>
        <position position="46"/>
    </location>
</feature>
<feature type="sequence variant" id="VAR_089768" description="Found in a patient with Parkinson disease; uncertain significance." evidence="24">
    <original>D</original>
    <variation>V</variation>
    <location>
        <position position="46"/>
    </location>
</feature>
<feature type="sequence variant" id="VAR_044150" description="In ALS9; loss of angiogenic activity; reduced ribonucleolytic activity; unable to translocate to the nucleus; dbSNP:rs121909542." evidence="14 24">
    <original>S</original>
    <variation>N</variation>
    <location>
        <position position="52"/>
    </location>
</feature>
<feature type="sequence variant" id="VAR_044151" description="In ALS9; marginally reduced ribonucleolytic activity; wild type far-UV CD spectra; dbSNP:rs121909538." evidence="12 15 24">
    <original>R</original>
    <variation>K</variation>
    <location>
        <position position="55"/>
    </location>
</feature>
<feature type="sequence variant" id="VAR_044152" description="In ALS9; reduced ribonucleolytic activity; low angiogenic activity; reduced mitogenic activity; reduced thermal stability; dbSNP:rs121909539." evidence="12 15 24">
    <original>C</original>
    <variation>W</variation>
    <location>
        <position position="63"/>
    </location>
</feature>
<feature type="sequence variant" id="VAR_089769" description="In ALS9; uncertain significance." evidence="24">
    <original>K</original>
    <variation>E</variation>
    <location>
        <position position="64"/>
    </location>
</feature>
<feature type="sequence variant" id="VAR_044153" description="In ALS9; reduced ribonucleolytic activity; low angiogenic activity; reduced mitogenic activity; moderate reduction of thermal stability; dbSNP:rs121909540." evidence="10 12 15 24">
    <original>K</original>
    <variation>I</variation>
    <location>
        <position position="64"/>
    </location>
</feature>
<feature type="sequence variant" id="VAR_044154" description="In ALS9; uncertain significance; reduced ribonucleolytic activity; moderate reduction of thermal stability; dbSNP:rs121909541." evidence="12 15 16 17">
    <original>I</original>
    <variation>V</variation>
    <location>
        <position position="70"/>
    </location>
</feature>
<feature type="sequence variant" id="VAR_089770" description="In ALS9; decreased interaction with the ribosome and ability to repress translation." evidence="21 47">
    <original>K</original>
    <variation>E</variation>
    <location>
        <position position="78"/>
    </location>
</feature>
<feature type="sequence variant" id="VAR_089771" description="Found in a patient with Parkinson disease; uncertain significance." evidence="24">
    <original>K</original>
    <variation>R</variation>
    <location>
        <position position="78"/>
    </location>
</feature>
<feature type="sequence variant" id="VAR_013148" description="In dbSNP:rs17560." evidence="5">
    <original>K</original>
    <variation>E</variation>
    <location>
        <position position="84"/>
    </location>
</feature>
<feature type="sequence variant" id="VAR_089772" description="In ALS9; uncertain significance." evidence="24">
    <original>T</original>
    <variation>S</variation>
    <location>
        <position position="104"/>
    </location>
</feature>
<feature type="sequence variant" id="VAR_089773" description="Found in a patient with Parkinson disease; uncertain significance." evidence="24">
    <original>R</original>
    <variation>Q</variation>
    <location>
        <position position="119"/>
    </location>
</feature>
<feature type="sequence variant" id="VAR_089774" description="In ALS9; uncertain significance." evidence="24">
    <original>F</original>
    <variation>I</variation>
    <location>
        <position position="124"/>
    </location>
</feature>
<feature type="sequence variant" id="VAR_089775" description="In ALS9; uncertain significance." evidence="25">
    <original>V</original>
    <variation>I</variation>
    <location>
        <position position="127"/>
    </location>
</feature>
<feature type="sequence variant" id="VAR_044155" description="In ALS9; loss of angiogenic activity; reduced tRNA ribonucleolytic activity; unable to translocate to the nucleus; dbSNP:rs121909543." evidence="14 19 24 39">
    <original>P</original>
    <variation>L</variation>
    <location>
        <position position="136"/>
    </location>
</feature>
<feature type="sequence variant" id="VAR_044156" description="In ALS9; dbSNP:rs121909544." evidence="16 24">
    <original>V</original>
    <variation>I</variation>
    <location>
        <position position="137"/>
    </location>
</feature>
<feature type="sequence variant" id="VAR_044157" description="In ALS9; uncertain significance." evidence="16 24">
    <original>H</original>
    <variation>R</variation>
    <location>
        <position position="138"/>
    </location>
</feature>
<feature type="sequence variant" id="VAR_089776" description="Found in a patient with Parkinson disease." evidence="24">
    <original>R</original>
    <variation>C</variation>
    <location>
        <position position="145"/>
    </location>
</feature>
<feature type="sequence variant" id="VAR_089777" description="In ALS9; uncertain significance." evidence="17 24">
    <original>R</original>
    <variation>H</variation>
    <location>
        <position position="145"/>
    </location>
</feature>
<feature type="mutagenesis site" description="Affects substrate preference. Significantly decreases binding affinity for RNH1." evidence="2 54">
    <original>R</original>
    <variation>A</variation>
    <location>
        <position position="29"/>
    </location>
</feature>
<feature type="mutagenesis site" description="Significantly decreases binding affinity for RNH1." evidence="56">
    <original>H</original>
    <variation>A</variation>
    <location>
        <position position="32"/>
    </location>
</feature>
<feature type="mutagenesis site" description="Slightly decreases binding affinity for RNH1." evidence="56">
    <original>Q</original>
    <variation>A</variation>
    <location>
        <position position="36"/>
    </location>
</feature>
<feature type="mutagenesis site" description="Abolished ribonuclease activity. does not affect binding to PLXNB2 receptor." evidence="38 47">
    <original>H</original>
    <variation>A</variation>
    <location>
        <position position="37"/>
    </location>
</feature>
<feature type="mutagenesis site" description="Homodimerization is similar to wild-type; causes mislocalization in the cytoplasm; strongly reduces ribonucleolytic activity." evidence="32">
    <original>L</original>
    <variation>P</variation>
    <location>
        <position position="59"/>
    </location>
</feature>
<feature type="mutagenesis site" description="Significantly decreases binding affinity for RNH1." evidence="2 56">
    <original>K</original>
    <variation>Q</variation>
    <location>
        <position position="64"/>
    </location>
</feature>
<feature type="mutagenesis site" description="Decreased ribonuclease activity." evidence="59">
    <original>T</original>
    <variation>A</variation>
    <location>
        <position position="68"/>
    </location>
</feature>
<feature type="mutagenesis site" description="Abolished binding to PLXNB2 receptor." evidence="38">
    <original>R</original>
    <variation>A</variation>
    <location>
        <position position="90"/>
    </location>
</feature>
<feature type="mutagenesis site" description="Slightly decreases binding affinity for RNH1." evidence="56">
    <original>N</original>
    <variation>A</variation>
    <location>
        <position position="92"/>
    </location>
</feature>
<feature type="mutagenesis site" description="Abolished binding to PLXNB2 receptor." evidence="38">
    <original>N</original>
    <variation>D</variation>
    <location>
        <position position="92"/>
    </location>
</feature>
<feature type="mutagenesis site" description="Increased ribonuclease activity." evidence="59">
    <original>T</original>
    <variation>A</variation>
    <location>
        <position position="104"/>
    </location>
</feature>
<feature type="mutagenesis site" description="Slightly increased ribonuclease activity." evidence="59">
    <original>T</original>
    <variation>D</variation>
    <location>
        <position position="104"/>
    </location>
</feature>
<feature type="mutagenesis site" description="Significantly decreases binding affinity for RNH1." evidence="20">
    <original>GG</original>
    <variation>RR</variation>
    <location>
        <begin position="109"/>
        <end position="110"/>
    </location>
</feature>
<feature type="mutagenesis site" description="Slightly decreases binding affinity for RNH1." evidence="56">
    <original>E</original>
    <variation>A</variation>
    <location>
        <position position="132"/>
    </location>
</feature>
<feature type="mutagenesis site" description="Slightly increased ribonuclease activity." evidence="52">
    <original>DQ</original>
    <variation>AA</variation>
    <location>
        <begin position="140"/>
        <end position="141"/>
    </location>
</feature>
<feature type="mutagenesis site" description="Strongly increased ribonuclease activity." evidence="4 31">
    <original>D</original>
    <variation>N</variation>
    <variation>H</variation>
    <variation>S</variation>
    <variation>A</variation>
    <location>
        <position position="140"/>
    </location>
</feature>
<feature type="mutagenesis site" description="Strongly increased ribonuclease activity." evidence="4 52">
    <original>Q</original>
    <variation>A</variation>
    <variation>G</variation>
    <location>
        <position position="141"/>
    </location>
</feature>
<feature type="mutagenesis site" description="Increased ribonuclease activity." evidence="4 55">
    <original>IF</original>
    <variation>AA</variation>
    <location>
        <begin position="143"/>
        <end position="144"/>
    </location>
</feature>
<feature type="helix" evidence="115">
    <location>
        <begin position="28"/>
        <end position="37"/>
    </location>
</feature>
<feature type="helix" evidence="115">
    <location>
        <begin position="47"/>
        <end position="56"/>
    </location>
</feature>
<feature type="turn" evidence="115">
    <location>
        <begin position="60"/>
        <end position="63"/>
    </location>
</feature>
<feature type="strand" evidence="115">
    <location>
        <begin position="65"/>
        <end position="70"/>
    </location>
</feature>
<feature type="helix" evidence="115">
    <location>
        <begin position="74"/>
        <end position="78"/>
    </location>
</feature>
<feature type="helix" evidence="115">
    <location>
        <begin position="79"/>
        <end position="81"/>
    </location>
</feature>
<feature type="turn" evidence="115">
    <location>
        <begin position="83"/>
        <end position="85"/>
    </location>
</feature>
<feature type="strand" evidence="115">
    <location>
        <begin position="86"/>
        <end position="89"/>
    </location>
</feature>
<feature type="turn" evidence="115">
    <location>
        <begin position="90"/>
        <end position="92"/>
    </location>
</feature>
<feature type="strand" evidence="115">
    <location>
        <begin position="93"/>
        <end position="98"/>
    </location>
</feature>
<feature type="strand" evidence="115">
    <location>
        <begin position="100"/>
        <end position="110"/>
    </location>
</feature>
<feature type="strand" evidence="115">
    <location>
        <begin position="112"/>
        <end position="115"/>
    </location>
</feature>
<feature type="strand" evidence="115">
    <location>
        <begin position="117"/>
        <end position="125"/>
    </location>
</feature>
<feature type="strand" evidence="115">
    <location>
        <begin position="128"/>
        <end position="132"/>
    </location>
</feature>
<feature type="strand" evidence="115">
    <location>
        <begin position="135"/>
        <end position="139"/>
    </location>
</feature>
<feature type="helix" evidence="115">
    <location>
        <begin position="141"/>
        <end position="144"/>
    </location>
</feature>
<accession>P03950</accession>
<accession>Q05CV1</accession>
<accession>Q53X86</accession>
<accession>Q6P5T2</accession>
<accession>Q8WXE7</accession>
<reference key="1">
    <citation type="journal article" date="1985" name="Biochemistry">
        <title>Sequence of the cDNA and gene for angiogenin, a human angiogenesis factor.</title>
        <authorList>
            <person name="Kurachi K."/>
            <person name="Davie E.W."/>
            <person name="Strydom D.J."/>
            <person name="Riordan J.F."/>
            <person name="Vallee B.L."/>
        </authorList>
    </citation>
    <scope>NUCLEOTIDE SEQUENCE [GENOMIC DNA]</scope>
</reference>
<reference key="2">
    <citation type="journal article" date="2002" name="Mol. Biol. Evol.">
        <title>Diversifying selection of the tumor-growth promoter angiogenin in primate evolution.</title>
        <authorList>
            <person name="Zhang J."/>
            <person name="Rosenberg H.F."/>
        </authorList>
    </citation>
    <scope>NUCLEOTIDE SEQUENCE [GENOMIC DNA]</scope>
    <scope>VARIANT GLU-84</scope>
</reference>
<reference key="3">
    <citation type="submission" date="2008-09" db="EMBL/GenBank/DDBJ databases">
        <authorList>
            <person name="Li J."/>
            <person name="Wang H."/>
        </authorList>
    </citation>
    <scope>NUCLEOTIDE SEQUENCE [MRNA]</scope>
</reference>
<reference key="4">
    <citation type="submission" date="2004-05" db="EMBL/GenBank/DDBJ databases">
        <title>Cloning of human full open reading frames in Gateway(TM) system entry vector (pDONR201).</title>
        <authorList>
            <person name="Ebert L."/>
            <person name="Schick M."/>
            <person name="Neubert P."/>
            <person name="Schatten R."/>
            <person name="Henze S."/>
            <person name="Korn B."/>
        </authorList>
    </citation>
    <scope>NUCLEOTIDE SEQUENCE [LARGE SCALE MRNA]</scope>
</reference>
<reference key="5">
    <citation type="submission" date="2008-01" db="EMBL/GenBank/DDBJ databases">
        <title>NEDO functional analysis of protein and research application project.</title>
        <authorList>
            <person name="Wakamatsu A."/>
            <person name="Yamamoto J."/>
            <person name="Kimura K."/>
            <person name="Kaida T."/>
            <person name="Tsuchiya K."/>
            <person name="Iida Y."/>
            <person name="Takayama Y."/>
            <person name="Murakawa K."/>
            <person name="Kanehori K."/>
            <person name="Andoh T."/>
            <person name="Kagawa N."/>
            <person name="Sato R."/>
            <person name="Kawamura Y."/>
            <person name="Tanaka S."/>
            <person name="Kisu Y."/>
            <person name="Sugano S."/>
            <person name="Goshima N."/>
            <person name="Nomura N."/>
            <person name="Isogai T."/>
        </authorList>
    </citation>
    <scope>NUCLEOTIDE SEQUENCE [LARGE SCALE MRNA]</scope>
    <source>
        <tissue>Small intestine</tissue>
    </source>
</reference>
<reference key="6">
    <citation type="submission" date="2005-09" db="EMBL/GenBank/DDBJ databases">
        <authorList>
            <person name="Mural R.J."/>
            <person name="Istrail S."/>
            <person name="Sutton G.G."/>
            <person name="Florea L."/>
            <person name="Halpern A.L."/>
            <person name="Mobarry C.M."/>
            <person name="Lippert R."/>
            <person name="Walenz B."/>
            <person name="Shatkay H."/>
            <person name="Dew I."/>
            <person name="Miller J.R."/>
            <person name="Flanigan M.J."/>
            <person name="Edwards N.J."/>
            <person name="Bolanos R."/>
            <person name="Fasulo D."/>
            <person name="Halldorsson B.V."/>
            <person name="Hannenhalli S."/>
            <person name="Turner R."/>
            <person name="Yooseph S."/>
            <person name="Lu F."/>
            <person name="Nusskern D.R."/>
            <person name="Shue B.C."/>
            <person name="Zheng X.H."/>
            <person name="Zhong F."/>
            <person name="Delcher A.L."/>
            <person name="Huson D.H."/>
            <person name="Kravitz S.A."/>
            <person name="Mouchard L."/>
            <person name="Reinert K."/>
            <person name="Remington K.A."/>
            <person name="Clark A.G."/>
            <person name="Waterman M.S."/>
            <person name="Eichler E.E."/>
            <person name="Adams M.D."/>
            <person name="Hunkapiller M.W."/>
            <person name="Myers E.W."/>
            <person name="Venter J.C."/>
        </authorList>
    </citation>
    <scope>NUCLEOTIDE SEQUENCE [LARGE SCALE GENOMIC DNA]</scope>
</reference>
<reference key="7">
    <citation type="journal article" date="2004" name="Genome Res.">
        <title>The status, quality, and expansion of the NIH full-length cDNA project: the Mammalian Gene Collection (MGC).</title>
        <authorList>
            <consortium name="The MGC Project Team"/>
        </authorList>
    </citation>
    <scope>NUCLEOTIDE SEQUENCE [LARGE SCALE MRNA]</scope>
    <source>
        <tissue>Liver</tissue>
    </source>
</reference>
<reference key="8">
    <citation type="journal article" date="1985" name="Biochemistry">
        <title>Amino acid sequence of human tumor derived angiogenin.</title>
        <authorList>
            <person name="Strydom D.J."/>
            <person name="Fett J.W."/>
            <person name="Lobb R.R."/>
            <person name="Alderman E.M."/>
            <person name="Bethune J.L."/>
            <person name="Riordan J.F."/>
            <person name="Vallee B.L."/>
        </authorList>
    </citation>
    <scope>PROTEIN SEQUENCE OF 25-147</scope>
    <scope>PYROGLUTAMATE FORMATION AT GLN-25</scope>
    <scope>DISULFIDE BONDS</scope>
</reference>
<reference key="9">
    <citation type="journal article" date="1985" name="Biochemistry">
        <title>Isolation and characterization of angiogenin, an angiogenic protein from human carcinoma cells.</title>
        <authorList>
            <person name="Fett J.W."/>
            <person name="Strydom D.J."/>
            <person name="Lobb R.R."/>
            <person name="Alderman E.M."/>
            <person name="Bethune J.L."/>
            <person name="Riordan J.F."/>
            <person name="Vallee B.L."/>
        </authorList>
    </citation>
    <scope>FUNCTION</scope>
</reference>
<reference key="10">
    <citation type="journal article" date="1987" name="Biochemistry">
        <title>Isolation of angiogenin from normal human plasma.</title>
        <authorList>
            <person name="Shapiro R."/>
            <person name="Strydom D.J."/>
            <person name="Olson K.A."/>
            <person name="Vallee B.L."/>
        </authorList>
    </citation>
    <scope>SUBCELLULAR LOCATION</scope>
</reference>
<reference key="11">
    <citation type="journal article" date="1986" name="Biochemistry">
        <title>Characteristic ribonucleolytic activity of human angiogenin.</title>
        <authorList>
            <person name="Shapiro R."/>
            <person name="Riordan J.F."/>
            <person name="Vallee B.L."/>
        </authorList>
    </citation>
    <scope>FUNCTION</scope>
</reference>
<reference key="12">
    <citation type="journal article" date="1987" name="Proc. Natl. Acad. Sci. U.S.A.">
        <title>Ribonucleolytic activity of angiogenin: essential histidine, lysine, and arginine residues.</title>
        <authorList>
            <person name="Shapiro R."/>
            <person name="Weremowicz S."/>
            <person name="Riordan J.F."/>
            <person name="Vallee B.L."/>
        </authorList>
    </citation>
    <scope>FUNCTION</scope>
</reference>
<reference key="13">
    <citation type="journal article" date="1987" name="Science">
        <title>Tissue distribution and developmental expression of the messenger RNA encoding angiogenin.</title>
        <authorList>
            <person name="Weiner H.L."/>
            <person name="Weiner L.H."/>
            <person name="Swain J.L."/>
        </authorList>
    </citation>
    <scope>TISSUE SPECIFICITY</scope>
</reference>
<reference key="14">
    <citation type="journal article" date="1988" name="Biochemistry">
        <title>Base cleavage specificity of angiogenin with Saccharomyces cerevisiae and Escherichia coli 5S RNAs.</title>
        <authorList>
            <person name="Rybak S.M."/>
            <person name="Vallee B.L."/>
        </authorList>
    </citation>
    <scope>FUNCTION</scope>
</reference>
<reference key="15">
    <citation type="journal article" date="1988" name="EMBO J.">
        <title>The primary structure of human ribonuclease/angiogenin inhibitor (RAI) discloses a novel highly diversified protein superfamily with a common repetitive module.</title>
        <authorList>
            <person name="Schneider R."/>
            <person name="Schneider-Scherzer E."/>
            <person name="Thurnher M."/>
            <person name="Auer B."/>
            <person name="Schweiger M."/>
        </authorList>
    </citation>
    <scope>ACTIVITY REGULATION</scope>
</reference>
<reference key="16">
    <citation type="journal article" date="1988" name="Proc. Natl. Acad. Sci. U.S.A.">
        <title>Mutagenesis of aspartic acid-116 enhances the ribonucleolytic activity and angiogenic potency of angiogenin.</title>
        <authorList>
            <person name="Harper J.W."/>
            <person name="Vallee B.L."/>
        </authorList>
    </citation>
    <scope>FUNCTION</scope>
    <scope>MUTAGENESIS OF ASP-140</scope>
</reference>
<reference key="17">
    <citation type="journal article" date="1989" name="Biochem. Biophys. Res. Commun.">
        <title>Characterization of ribonucleolytic activity of angiogenin towards tRNA.</title>
        <authorList>
            <person name="Lee F.S."/>
            <person name="Vallee B.L."/>
        </authorList>
    </citation>
    <scope>FUNCTION</scope>
</reference>
<reference key="18">
    <citation type="journal article" date="1992" name="J. Biol. Chem.">
        <title>Angiogenin is a cytotoxic, tRNA-specific ribonuclease in the RNase A superfamily.</title>
        <authorList>
            <person name="Saxena S.K."/>
            <person name="Rybak S.M."/>
            <person name="Davey R.T. Jr."/>
            <person name="Youle R.J."/>
            <person name="Ackerman E.J."/>
        </authorList>
    </citation>
    <scope>FUNCTION</scope>
</reference>
<reference key="19">
    <citation type="journal article" date="1993" name="Biochim. Biophys. Acta">
        <title>Characterization and sequencing of rabbit, pig and mouse angiogenins: discernment of functionally important residues and regions.</title>
        <authorList>
            <person name="Bond M.D."/>
            <person name="Strydom D.J."/>
            <person name="Vallee B.L."/>
        </authorList>
    </citation>
    <scope>FUNCTION</scope>
</reference>
<reference key="20">
    <citation type="journal article" date="1994" name="Biochem. Biophys. Res. Commun.">
        <title>Identification of the nucleolar targeting signal of human angiogenin.</title>
        <authorList>
            <person name="Moroianu J."/>
            <person name="Riordan J.F."/>
        </authorList>
    </citation>
    <scope>SUBCELLULAR LOCATION</scope>
    <scope>NUCLEOLAR LOCALIZATION SIGNAL</scope>
</reference>
<reference key="21">
    <citation type="journal article" date="1994" name="Proc. Natl. Acad. Sci. U.S.A.">
        <title>Nuclear translocation of angiogenin in proliferating endothelial cells is essential to its angiogenic activity.</title>
        <authorList>
            <person name="Moroianu J."/>
            <person name="Riordan J.F."/>
        </authorList>
    </citation>
    <scope>FUNCTION</scope>
    <scope>SUBCELLULAR LOCATION</scope>
</reference>
<reference key="22">
    <citation type="journal article" date="1994" name="Proc. Natl. Acad. Sci. U.S.A.">
        <title>Role of glutamine-117 in the ribonucleolytic activity of human angiogenin.</title>
        <authorList>
            <person name="Russo N."/>
            <person name="Shapiro R."/>
            <person name="Acharya K.R."/>
            <person name="Riordan J.F."/>
            <person name="Vallee B.L."/>
        </authorList>
    </citation>
    <scope>FUNCTION</scope>
    <scope>ACTIVITY REGULATION</scope>
    <scope>MUTAGENESIS OF 140-ASP-GLN-141 AND GLN-141</scope>
</reference>
<reference key="23">
    <citation type="journal article" date="1996" name="Proc. Natl. Acad. Sci. U.S.A.">
        <title>A combined kinetic and modeling study of the catalytic center subsites of human angiogenin.</title>
        <authorList>
            <person name="Russo N."/>
            <person name="Acharya K.R."/>
            <person name="Vallee B.L."/>
            <person name="Shapiro R."/>
        </authorList>
    </citation>
    <scope>FUNCTION</scope>
    <scope>MUTAGENESIS OF ARG-29</scope>
</reference>
<reference key="24">
    <citation type="journal article" date="1996" name="Proc. Natl. Acad. Sci. U.S.A.">
        <title>The C-terminal region of human angiogenin has a dual role in enzymatic activity.</title>
        <authorList>
            <person name="Russo N."/>
            <person name="Nobile V."/>
            <person name="Di Donato A."/>
            <person name="Riordan J.F."/>
            <person name="Vallee B.L."/>
        </authorList>
    </citation>
    <scope>FUNCTION</scope>
    <scope>ACTIVITY REGULATION</scope>
    <scope>MUTAGENESIS OF 143-ILE-PHE-144</scope>
</reference>
<reference key="25">
    <citation type="journal article" date="1997" name="Proc. Natl. Acad. Sci. U.S.A.">
        <title>Site-specific mutagenesis reveals differences in the structural bases for tight binding of RNase inhibitor to angiogenin and RNase A.</title>
        <authorList>
            <person name="Chen C.Z."/>
            <person name="Shapiro R."/>
        </authorList>
    </citation>
    <scope>MUTAGENESIS OF HIS-32; GLN-36; LYS-64; ASN-92 AND GLU-132</scope>
</reference>
<reference key="26">
    <citation type="journal article" date="1998" name="Biochemistry">
        <title>Structural features that determine the enzymatic potency and specificity of human angiogenin: threonine-80 and residues 58-70 and 116-123.</title>
        <authorList>
            <person name="Shapiro R."/>
        </authorList>
    </citation>
    <scope>FUNCTION</scope>
    <scope>ACTIVITY REGULATION</scope>
    <scope>MUTAGENESIS OF THR-68 AND THR-104</scope>
</reference>
<reference key="27">
    <citation type="journal article" date="1999" name="Biochemistry">
        <title>Superadditive and subadditive effects of 'hot spot' mutations within the interfaces of placental ribonuclease inhibitor with angiogenin and ribonuclease A.</title>
        <authorList>
            <person name="Chen C.Z."/>
            <person name="Shapiro R."/>
        </authorList>
    </citation>
    <scope>INTERACTION WITH RNH1</scope>
    <scope>MUTAGENESIS OF ARG-29 AND LYS-64</scope>
</reference>
<reference key="28">
    <citation type="journal article" date="2002" name="Biochem. Biophys. Res. Commun.">
        <title>The nuclear function of angiogenin in endothelial cells is related to rRNA production.</title>
        <authorList>
            <person name="Xu Z.P."/>
            <person name="Tsuji T."/>
            <person name="Riordan J.F."/>
            <person name="Hu G.F."/>
        </authorList>
    </citation>
    <scope>FUNCTION</scope>
    <scope>SUBCELLULAR LOCATION</scope>
    <scope>DNA-BINDING</scope>
</reference>
<reference key="29">
    <citation type="journal article" date="2005" name="Cancer Res.">
        <title>Angiogenin is translocated to the nucleus of HeLa cells and is involved in ribosomal RNA transcription and cell proliferation.</title>
        <authorList>
            <person name="Tsuji T."/>
            <person name="Sun Y."/>
            <person name="Kishimoto K."/>
            <person name="Olson K.A."/>
            <person name="Liu S."/>
            <person name="Hirukawa S."/>
            <person name="Hu G.F."/>
        </authorList>
    </citation>
    <scope>FUNCTION</scope>
    <scope>SUBCELLULAR LOCATION</scope>
</reference>
<reference key="30">
    <citation type="journal article" date="2009" name="Biochemistry">
        <title>Ribonuclease inhibitor regulates neovascularization by human angiogenin.</title>
        <authorList>
            <person name="Dickson K.A."/>
            <person name="Kang D.K."/>
            <person name="Kwon Y.S."/>
            <person name="Kim J.C."/>
            <person name="Leland P.A."/>
            <person name="Kim B.M."/>
            <person name="Chang S.I."/>
            <person name="Raines R.T."/>
        </authorList>
    </citation>
    <scope>FUNCTION</scope>
    <scope>ACTIVITY REGULATION</scope>
    <scope>INTERACTION WITH RNH1</scope>
    <scope>MUTAGENESIS OF 109-GLY-GLY-110</scope>
</reference>
<reference key="31">
    <citation type="journal article" date="2009" name="J. Cell Biol.">
        <title>Angiogenin cleaves tRNA and promotes stress-induced translational repression.</title>
        <authorList>
            <person name="Yamasaki S."/>
            <person name="Ivanov P."/>
            <person name="Hu G.F."/>
            <person name="Anderson P."/>
        </authorList>
    </citation>
    <scope>FUNCTION</scope>
    <scope>INTERACTION WITH RNH1</scope>
    <scope>ACTIVITY REGULATION</scope>
</reference>
<reference key="32">
    <citation type="journal article" date="2010" name="J. Biol. Chem.">
        <title>Angiogenin-induced tRNA-derived stress-induced RNAs promote stress-induced stress granule assembly.</title>
        <authorList>
            <person name="Emara M.M."/>
            <person name="Ivanov P."/>
            <person name="Hickman T."/>
            <person name="Dawra N."/>
            <person name="Tisdale S."/>
            <person name="Kedersha N."/>
            <person name="Hu G.F."/>
            <person name="Anderson P."/>
        </authorList>
    </citation>
    <scope>FUNCTION</scope>
</reference>
<reference key="33">
    <citation type="journal article" date="2011" name="Mol. Cell">
        <title>Angiogenin-induced tRNA fragments inhibit translation initiation.</title>
        <authorList>
            <person name="Ivanov P."/>
            <person name="Emara M.M."/>
            <person name="Villen J."/>
            <person name="Gygi S.P."/>
            <person name="Anderson P."/>
        </authorList>
    </citation>
    <scope>FUNCTION</scope>
</reference>
<reference key="34">
    <citation type="journal article" date="2013" name="J. Cell Sci.">
        <title>Ribonuclease/angiogenin inhibitor 1 regulates stress-induced subcellular localization of angiogenin to control growth and survival.</title>
        <authorList>
            <person name="Pizzo E."/>
            <person name="Sarcinelli C."/>
            <person name="Sheng J."/>
            <person name="Fusco S."/>
            <person name="Formiggini F."/>
            <person name="Netti P."/>
            <person name="Yu W."/>
            <person name="D'Alessio G."/>
            <person name="Hu G.F."/>
        </authorList>
    </citation>
    <scope>FUNCTION</scope>
    <scope>ACTIVITY REGULATION</scope>
    <scope>SUBCELLULAR LOCATION</scope>
    <scope>INTERACTION WITH RNH1</scope>
</reference>
<reference key="35">
    <citation type="journal article" date="2016" name="Cell">
        <title>Angiogenin promotes hematopoietic regeneration by dichotomously regulating quiescence of stem and progenitor cells.</title>
        <authorList>
            <person name="Goncalves K.A."/>
            <person name="Silberstein L."/>
            <person name="Li S."/>
            <person name="Severe N."/>
            <person name="Hu M.G."/>
            <person name="Yang H."/>
            <person name="Scadden D.T."/>
            <person name="Hu G.F."/>
        </authorList>
    </citation>
    <scope>FUNCTION</scope>
    <scope>INTERACTION WITH RNH1</scope>
    <scope>SUBCELLULAR LOCATION</scope>
</reference>
<reference key="36">
    <citation type="journal article" date="2017" name="Cell">
        <title>Plexin-B2 mediates physiologic and pathologic functions of angiogenin.</title>
        <authorList>
            <person name="Yu W."/>
            <person name="Goncalves K.A."/>
            <person name="Li S."/>
            <person name="Kishikawa H."/>
            <person name="Sun G."/>
            <person name="Yang H."/>
            <person name="Vanli N."/>
            <person name="Wu Y."/>
            <person name="Jiang Y."/>
            <person name="Hu M.G."/>
            <person name="Friedel R.H."/>
            <person name="Hu G.F."/>
        </authorList>
    </citation>
    <scope>FUNCTION</scope>
    <scope>SUBCELLULAR LOCATION</scope>
    <scope>MUTAGENESIS OF HIS-37; ARG-90 AND ASN-92</scope>
</reference>
<reference key="37">
    <citation type="journal article" date="2018" name="RNA">
        <title>Human angiogenin is a potent cytotoxin in the absence of ribonuclease inhibitor.</title>
        <authorList>
            <person name="Thomas S.P."/>
            <person name="Hoang T.T."/>
            <person name="Ressler V.T."/>
            <person name="Raines R.T."/>
        </authorList>
    </citation>
    <scope>FUNCTION</scope>
    <scope>SUBCELLULAR LOCATION</scope>
    <scope>CHARACTERIZATION OF VARIANT ALS9 LEU-136</scope>
</reference>
<reference key="38">
    <citation type="journal article" date="2019" name="J. Biol. Chem.">
        <title>Angiogenin generates specific stress-induced tRNA halves and is not involved in tRF-3-mediated gene silencing.</title>
        <authorList>
            <person name="Su Z."/>
            <person name="Kuscu C."/>
            <person name="Malik A."/>
            <person name="Shibata E."/>
            <person name="Dutta A."/>
        </authorList>
    </citation>
    <scope>FUNCTION</scope>
</reference>
<reference key="39">
    <citation type="journal article" date="2020" name="EMBO J.">
        <title>Myeloid cells protect intestinal epithelial barrier integrity through the angiogenin/plexin-B2 axis.</title>
        <authorList>
            <person name="Bai R."/>
            <person name="Sun D."/>
            <person name="Chen M."/>
            <person name="Shi X."/>
            <person name="Luo L."/>
            <person name="Yao Z."/>
            <person name="Liu Y."/>
            <person name="Ge X."/>
            <person name="Gao X."/>
            <person name="Hu G.F."/>
            <person name="Zhou W."/>
            <person name="Sheng J."/>
            <person name="Xu Z."/>
        </authorList>
    </citation>
    <scope>FUNCTION</scope>
    <scope>ACTIVITY REGULATION</scope>
    <scope>INTERACTION WITH RNH1</scope>
</reference>
<reference key="40">
    <citation type="journal article" date="1994" name="Proc. Natl. Acad. Sci. U.S.A.">
        <title>Crystal structure of human angiogenin reveals the structural basis for its functional divergence from ribonuclease.</title>
        <authorList>
            <person name="Acharya K.R."/>
            <person name="Shapiro R."/>
            <person name="Allen S.C."/>
            <person name="Riordan J.F."/>
            <person name="Vallee B.L."/>
        </authorList>
    </citation>
    <scope>X-RAY CRYSTALLOGRAPHY (2.40 ANGSTROMS) OF 25-147</scope>
    <scope>DISULFIDE BONDS</scope>
</reference>
<reference key="41">
    <citation type="journal article" date="1997" name="EMBO J.">
        <title>Molecular recognition of human angiogenin by placental ribonuclease inhibitor -- an X-ray crystallographic study at 2.0-A resolution.</title>
        <authorList>
            <person name="Papageorgiou A.C."/>
            <person name="Shapiro R."/>
            <person name="Acharya K.R."/>
        </authorList>
    </citation>
    <scope>X-RAY CRYSTALLOGRAPHY (2.0 ANGSTROMS) OF 25-147 IN COMPLEX WITH RNH1</scope>
    <scope>DISULFIDE BONDS</scope>
    <scope>SUBUNIT</scope>
</reference>
<reference key="42">
    <citation type="journal article" date="1999" name="J. Mol. Biol.">
        <title>Refined crystal structures of native human angiogenin and two active site variants: implications for the unique functional properties of an enzyme involved in neovascularisation during tumour growth.</title>
        <authorList>
            <person name="Leonidas D.D."/>
            <person name="Shapiro R."/>
            <person name="Allen S.C."/>
            <person name="Subbarao G.V."/>
            <person name="Veluraja K."/>
            <person name="Acharya K.R."/>
        </authorList>
    </citation>
    <scope>X-RAY CRYSTALLOGRAPHY (1.80 ANGSTROMS) OF 26-147</scope>
    <scope>ACTIVE SITES</scope>
    <scope>DISULFIDE BONDS</scope>
</reference>
<reference key="43">
    <citation type="journal article" date="2001" name="Protein Sci.">
        <title>Binding of phosphate and pyrophosphate ions at the active site of human angiogenin as revealed by X-ray crystallography.</title>
        <authorList>
            <person name="Leonidas D.D."/>
            <person name="Chavali G.B."/>
            <person name="Jardine A.M."/>
            <person name="Li S."/>
            <person name="Shapiro R."/>
            <person name="Acharya K.R."/>
        </authorList>
    </citation>
    <scope>X-RAY CRYSTALLOGRAPHY (2.0 ANGSTROMS) OF 26-147 OF MUTANT GLY-141 IN COMPLEX WITH PHOSPHATE AND PYROPHOSPHATE</scope>
    <scope>ACTIVE SITES</scope>
    <scope>DISULFIDE BONDS</scope>
</reference>
<reference key="44">
    <citation type="journal article" date="2002" name="Biochemistry">
        <title>Crystallographic studies on the role of the C-terminal segment of human angiogenin in defining enzymatic potency.</title>
        <authorList>
            <person name="Leonidas D.D."/>
            <person name="Shapiro R."/>
            <person name="Subbarao G.V."/>
            <person name="Russo A."/>
            <person name="Acharya K.R."/>
        </authorList>
    </citation>
    <scope>X-RAY CRYSTALLOGRAPHY (1.80 ANGSTROMS) OF 26-147</scope>
    <scope>DISULFIDE BONDS</scope>
    <scope>MUTAGENESIS OF ASP-140; GLN-141 AND 143-ILE-PHE-144</scope>
</reference>
<reference key="45">
    <citation type="journal article" date="2003" name="Structure">
        <title>The crystal structure of human angiogenin in complex with an antitumor neutralizing antibody.</title>
        <authorList>
            <person name="Chavali G.B."/>
            <person name="Papageorgiou A.C."/>
            <person name="Olson K.A."/>
            <person name="Fett J.W."/>
            <person name="Hu G."/>
            <person name="Shapiro R."/>
            <person name="Acharya K.R."/>
        </authorList>
    </citation>
    <scope>X-RAY CRYSTALLOGRAPHY (2.00 ANGSTROMS) OF 26-147</scope>
    <scope>DISULFIDE BONDS</scope>
</reference>
<reference key="46">
    <citation type="journal article" date="2004" name="Biochemistry">
        <title>Crystallographic studies on structural features that determine the enzymatic specificity and potency of human angiogenin: Thr44, Thr80, and residues 38-41.</title>
        <authorList>
            <person name="Holloway D.E."/>
            <person name="Chavali G.B."/>
            <person name="Hares M.C."/>
            <person name="Baker M.D."/>
            <person name="Subbarao G.V."/>
            <person name="Shapiro R."/>
            <person name="Acharya K.R."/>
        </authorList>
    </citation>
    <scope>X-RAY CRYSTALLOGRAPHY (2.1 ANGSTROMS) OF MUTANTS ASP-68 AND ALA-104</scope>
    <scope>DISULFIDE BONDS</scope>
</reference>
<reference key="47">
    <citation type="journal article" date="1997" name="Eur. J. Biochem.">
        <title>Three-dimensional solution structure of human angiogenin determined by 1H,15N-NMR spectroscopy -- characterization of histidine protonation states and pKa values.</title>
        <authorList>
            <person name="Lequin O."/>
            <person name="Thuering H."/>
            <person name="Robin M."/>
            <person name="Lallemand J.-Y."/>
        </authorList>
    </citation>
    <scope>STRUCTURE BY NMR</scope>
    <scope>DISULFIDE BONDS</scope>
</reference>
<reference evidence="83 84 85 86 87 88 89 90 91 92 93" key="48">
    <citation type="journal article" date="2012" name="Nat. Commun.">
        <title>Structural and molecular insights into the mechanism of action of human angiogenin-ALS variants in neurons.</title>
        <authorList>
            <person name="Thiyagarajan N."/>
            <person name="Ferguson R."/>
            <person name="Subramanian V."/>
            <person name="Acharya K.R."/>
        </authorList>
    </citation>
    <scope>X-RAY CRYSTALLOGRAPHY (1.04 ANGSTROMS) OF 24-147</scope>
    <scope>FUNCTION</scope>
    <scope>SUBCELLULAR LOCATION</scope>
</reference>
<reference key="49">
    <citation type="journal article" date="2012" name="PLoS ONE">
        <title>Mechanisms of loss of functions of human angiogenin variants implicated in amyotrophic lateral sclerosis.</title>
        <authorList>
            <person name="Padhi A.K."/>
            <person name="Kumar H."/>
            <person name="Vasaikar S.V."/>
            <person name="Jayaram B."/>
            <person name="Gomes J."/>
        </authorList>
    </citation>
    <scope>3D-STRUCTURE MODELING</scope>
</reference>
<reference evidence="99 100 101 102 103 104 105 106 107 108 109" key="50">
    <citation type="journal article" date="2017" name="Sci. Rep.">
        <title>Structural insights into human angiogenin variants implicated in Parkinson's disease and Amyotrophic Lateral Sclerosis.</title>
        <authorList>
            <person name="Bradshaw W.J."/>
            <person name="Rehman S."/>
            <person name="Pham T.T."/>
            <person name="Thiyagarajan N."/>
            <person name="Lee R.L."/>
            <person name="Subramanian V."/>
            <person name="Acharya K.R."/>
        </authorList>
    </citation>
    <scope>X-RAY CRYSTALLOGRAPHY (1.35 ANGSTROMS) OF 25-147</scope>
    <scope>FUNCTION</scope>
    <scope>DISULFIDE BONDS</scope>
</reference>
<reference key="51">
    <citation type="journal article" date="2021" name="Int. J. Mol. Sci.">
        <title>NMR Characterization of Angiogenin Variants and tRNAAla Products Impacting Aberrant Protein Oligomerization.</title>
        <authorList>
            <person name="Fagagnini A."/>
            <person name="Garavis M."/>
            <person name="Gomez-Pinto I."/>
            <person name="Fasoli S."/>
            <person name="Gotte G."/>
            <person name="Laurents D.V."/>
        </authorList>
    </citation>
    <scope>STRUCTURE BY NMR</scope>
</reference>
<reference evidence="111 112 113" key="52">
    <citation type="journal article" date="2023" name="Biochemistry">
        <title>Structural and biochemical characterization of the human angiogenin-proliferating cell nuclear antigen interaction.</title>
        <authorList>
            <person name="Papaioannou O.S.E."/>
            <person name="Tsika A.C."/>
            <person name="Rovoli M."/>
            <person name="Papadopoulos G.E."/>
            <person name="Kontopidis G."/>
            <person name="Spyroulias G.A."/>
            <person name="Leonidas D.D."/>
        </authorList>
    </citation>
    <scope>X-RAY CRYSTALLOGRAPHY (1.60 ANGSTROMS) OF 25-145</scope>
    <scope>INTERACTION WITH PCNA</scope>
    <scope>DISULFIDE BONDS</scope>
</reference>
<reference key="53">
    <citation type="journal article" date="2024" name="Nature">
        <title>Structural mechanism of angiogenin activation by the ribosome.</title>
        <authorList>
            <person name="Loveland A.B."/>
            <person name="Koh C.S."/>
            <person name="Ganesan R."/>
            <person name="Jacobson A."/>
            <person name="Korostelev A.A."/>
        </authorList>
    </citation>
    <scope>STRUCTURE BY ELECTRON MICROSCOPY (3.0 ANGSTROMS) IN COMPLEX WITH TRNA AND RIBOSOME</scope>
    <scope>ACTIVE SITES</scope>
    <scope>DISULFIDE BONDS</scope>
    <scope>FUNCTION</scope>
    <scope>ACTIVITY REGULATION</scope>
    <scope>CHARACTERIZATION OF VARIANT ALS9 GLU-78</scope>
    <scope>MUTAGENESIS OF HIS-37</scope>
</reference>
<reference key="54">
    <citation type="journal article" date="2004" name="Neurology">
        <title>A novel candidate region for ALS on chromosome 14q11.2.</title>
        <authorList>
            <person name="Greenway M.J."/>
            <person name="Alexander M.D."/>
            <person name="Ennis S."/>
            <person name="Traynor B.J."/>
            <person name="Corr B."/>
            <person name="Frost E."/>
            <person name="Green A."/>
            <person name="Hardiman O."/>
        </authorList>
    </citation>
    <scope>VARIANT ALS9 ILE-64</scope>
</reference>
<reference key="55">
    <citation type="journal article" date="2006" name="Nat. Genet.">
        <title>ANG mutations segregate with familial and 'sporadic' amyotrophic lateral sclerosis.</title>
        <authorList>
            <person name="Greenway M.J."/>
            <person name="Andersen P.M."/>
            <person name="Russ C."/>
            <person name="Ennis S."/>
            <person name="Cashman S."/>
            <person name="Donaghy C."/>
            <person name="Patterson V."/>
            <person name="Swingler R."/>
            <person name="Kieran D."/>
            <person name="Prehn J."/>
            <person name="Morrison K.E."/>
            <person name="Green A."/>
            <person name="Acharya K.R."/>
            <person name="Brown R.H. Jr."/>
            <person name="Hardiman O."/>
        </authorList>
    </citation>
    <scope>VARIANTS ALS9 LEU-36; ILE-41; GLU-41; LYS-55; TRP-63; ILE-64 AND VAL-70</scope>
</reference>
<reference key="56">
    <citation type="journal article" date="2007" name="Ann. Neurol.">
        <title>Angiogenin loss-of-function mutations in amyotrophic lateral sclerosis.</title>
        <authorList>
            <person name="Wu D."/>
            <person name="Yu W."/>
            <person name="Kishikawa H."/>
            <person name="Folkerth R.D."/>
            <person name="Iafrate A.J."/>
            <person name="Shen Y."/>
            <person name="Xin W."/>
            <person name="Sims K."/>
            <person name="Hu G.-F."/>
        </authorList>
    </citation>
    <scope>VARIANTS ALS9 SER-20; ILE-41; ASN-52 AND LEU-136</scope>
    <scope>CHARACTERIZATION OF VARIANTS ALS9 ILE-41; ASN-52 AND LEU-136</scope>
    <scope>TISSUE SPECIFICITY</scope>
</reference>
<reference key="57">
    <citation type="journal article" date="2007" name="Biochemistry">
        <title>Characterization of human angiogenin variants implicated in amyotrophic lateral sclerosis.</title>
        <authorList>
            <person name="Crabtree B."/>
            <person name="Thiyagarajan N."/>
            <person name="Prior S.H."/>
            <person name="Wilson P."/>
            <person name="Iyer S."/>
            <person name="Ferns T."/>
            <person name="Shapiro R."/>
            <person name="Brew K."/>
            <person name="Subramanian V."/>
            <person name="Acharya K.R."/>
        </authorList>
    </citation>
    <scope>CHARACTERIZATION OF VARIANTS ALS9 LEU-36; ILE-41; GLU-41; LYS-55; TRP-63; ILE-64 AND VAL-70</scope>
    <scope>CHARACTERIZATION OF VARIANT ALS9 VAL-70</scope>
</reference>
<reference key="58">
    <citation type="journal article" date="2008" name="Arch. Neurol.">
        <title>Mutations of the ANG gene in French patients with sporadic amyotrophic lateral sclerosis.</title>
        <authorList>
            <consortium name="French Amyotrophic Lateral Sclerosis (ALS) Study Group"/>
            <person name="Paubel A."/>
            <person name="Violette J."/>
            <person name="Amy M."/>
            <person name="Praline J."/>
            <person name="Meininger V."/>
            <person name="Camu W."/>
            <person name="Corcia P."/>
            <person name="Andres C.R."/>
            <person name="Vourc'h P."/>
        </authorList>
    </citation>
    <scope>VARIANTS ALS9 VAL-70 AND HIS-145</scope>
</reference>
<reference key="59">
    <citation type="journal article" date="2008" name="Neurogenetics">
        <title>Identification of new ANG gene mutations in a large cohort of Italian patients with amyotrophic lateral sclerosis.</title>
        <authorList>
            <person name="Gellera C."/>
            <person name="Colombrita C."/>
            <person name="Ticozzi N."/>
            <person name="Castellotti B."/>
            <person name="Bragato C."/>
            <person name="Ratti A."/>
            <person name="Taroni F."/>
            <person name="Silani V."/>
        </authorList>
    </citation>
    <scope>VARIANTS ALS9 SER-12; SER-20; VAL-70; ILE-137 AND ARG-138</scope>
</reference>
<reference key="60">
    <citation type="journal article" date="2009" name="Neurology">
        <title>A case of ALS-FTD in a large FALS pedigree with a K17I ANG mutation.</title>
        <authorList>
            <person name="van Es M.A."/>
            <person name="Diekstra F.P."/>
            <person name="Veldink J.H."/>
            <person name="Baas F."/>
            <person name="Bourque P.R."/>
            <person name="Schelhaas H.J."/>
            <person name="Strengman E."/>
            <person name="Hennekam E.A."/>
            <person name="Lindhout D."/>
            <person name="Ophoff R.A."/>
            <person name="van den Berg L.H."/>
        </authorList>
    </citation>
    <scope>VARIANT ALS9 GLU-41</scope>
</reference>
<reference key="61">
    <citation type="journal article" date="2008" name="Neuromuscul. Disord.">
        <title>A novel angiogenin gene mutation in a sporadic patient with amyotrophic lateral sclerosis from southern Italy.</title>
        <authorList>
            <person name="Conforti F.L."/>
            <person name="Sprovieri T."/>
            <person name="Mazzei R."/>
            <person name="Ungaro C."/>
            <person name="La Bella V."/>
            <person name="Tessitore A."/>
            <person name="Patitucci A."/>
            <person name="Magariello A."/>
            <person name="Gabriele A.L."/>
            <person name="Tedeschi G."/>
            <person name="Simone I.L."/>
            <person name="Majorana G."/>
            <person name="Valentino P."/>
            <person name="Condino F."/>
            <person name="Bono F."/>
            <person name="Monsurro M.R."/>
            <person name="Muglia M."/>
            <person name="Quattrone A."/>
        </authorList>
    </citation>
    <scope>INVOLVEMENT IN ALS9</scope>
</reference>
<reference key="62">
    <citation type="journal article" date="2009" name="J. Neurol.">
        <title>Identification of novel Angiogenin (ANG) gene missense variants in German patients with amyotrophic lateral sclerosis.</title>
        <authorList>
            <person name="Fernandez-Santiago R."/>
            <person name="Hoenig S."/>
            <person name="Lichtner P."/>
            <person name="Sperfeld A.D."/>
            <person name="Sharma M."/>
            <person name="Berg D."/>
            <person name="Weichenrieder O."/>
            <person name="Illig T."/>
            <person name="Eger K."/>
            <person name="Meyer T."/>
            <person name="Anneser J."/>
            <person name="Muench C."/>
            <person name="Zierz S."/>
            <person name="Gasser T."/>
            <person name="Ludolph A."/>
        </authorList>
    </citation>
    <scope>VARIANTS ALS9 LEU-12 AND GLU-78</scope>
</reference>
<reference key="63">
    <citation type="journal article" date="2011" name="Ann. Neurol.">
        <title>Angiogenin variants in Parkinson disease and amyotrophic lateral sclerosis.</title>
        <authorList>
            <person name="van Es M.A."/>
            <person name="Schelhaas H.J."/>
            <person name="van Vught P.W."/>
            <person name="Ticozzi N."/>
            <person name="Andersen P.M."/>
            <person name="Groen E.J."/>
            <person name="Schulte C."/>
            <person name="Blauw H.M."/>
            <person name="Koppers M."/>
            <person name="Diekstra F.P."/>
            <person name="Fumoto K."/>
            <person name="LeClerc A.L."/>
            <person name="Keagle P."/>
            <person name="Bloem B.R."/>
            <person name="Scheffer H."/>
            <person name="van Nuenen B.F."/>
            <person name="van Blitterswijk M."/>
            <person name="van Rheenen W."/>
            <person name="Wills A.M."/>
            <person name="Lowe P.P."/>
            <person name="Hu G.F."/>
            <person name="Yu W."/>
            <person name="Kishikawa H."/>
            <person name="Wu D."/>
            <person name="Folkerth R.D."/>
            <person name="Mariani C."/>
            <person name="Goldwurm S."/>
            <person name="Pezzoli G."/>
            <person name="Van Damme P."/>
            <person name="Lemmens R."/>
            <person name="Dahlberg C."/>
            <person name="Birve A."/>
            <person name="Fernandez-Santiago R."/>
            <person name="Waibel S."/>
            <person name="Klein C."/>
            <person name="Weber M."/>
            <person name="van der Kooi A.J."/>
            <person name="de Visser M."/>
            <person name="Verbaan D."/>
            <person name="van Hilten J.J."/>
            <person name="Heutink P."/>
            <person name="Hennekam E.A."/>
            <person name="Cuppen E."/>
            <person name="Berg D."/>
            <person name="Brown R.H. Jr."/>
            <person name="Silani V."/>
            <person name="Gasser T."/>
            <person name="Ludolph A.C."/>
            <person name="Robberecht W."/>
            <person name="Ophoff R.A."/>
            <person name="Veldink J.H."/>
            <person name="Pasterkamp R.J."/>
            <person name="de Bakker P.I."/>
            <person name="Landers J.E."/>
            <person name="van de Warrenburg B.P."/>
            <person name="van den Berg L.H."/>
        </authorList>
    </citation>
    <scope>VARIANTS ALS9 LEU-12; SER-12; ASP-15; GLN-20; SER-20; LEU-36; GLU-41; ASN-52; LYS-55; TRP-63; ILE-64; GLU-64; SER-104; ILE-124; LEU-136; ILE-137; ARG-138 AND HIS-145</scope>
    <scope>VARIANTS ALA-13; ASP-17; ARG-37; VAL-46; ARG-78; GLN-119 AND CYS-145</scope>
</reference>
<reference key="64">
    <citation type="journal article" date="2012" name="Amyotroph. Lateral Scler.">
        <title>SOD1, ANG, TARDBP and FUS mutations in amyotrophic lateral sclerosis: a United States clinical testing lab experience.</title>
        <authorList>
            <person name="Brown J.A."/>
            <person name="Min J."/>
            <person name="Staropoli J.F."/>
            <person name="Collin E."/>
            <person name="Bi S."/>
            <person name="Feng X."/>
            <person name="Barone R."/>
            <person name="Cao Y."/>
            <person name="O'Malley L."/>
            <person name="Xin W."/>
            <person name="Mullen T.E."/>
            <person name="Sims K.B."/>
        </authorList>
    </citation>
    <scope>VARIANTS ALS9 HIS-38; ILE-41 AND GLY-46</scope>
</reference>
<reference key="65">
    <citation type="journal article" date="2012" name="Amyotroph. Lateral Scler.">
        <title>Identification of a novel missense mutation in angiogenin in a Chinese amyotrophic lateral sclerosis cohort.</title>
        <authorList>
            <person name="Zou Z.Y."/>
            <person name="Wang X.N."/>
            <person name="Liu M.S."/>
            <person name="Sun Q."/>
            <person name="Li X.G."/>
            <person name="Cui L.Y."/>
            <person name="Kong J."/>
        </authorList>
    </citation>
    <scope>VARIANT ALS9 ILE-127</scope>
</reference>
<reference key="66">
    <citation type="journal article" date="2014" name="PLoS ONE">
        <title>Computational and functional characterization of Angiogenin mutations, and correlation with amyotrophic lateral sclerosis.</title>
        <authorList>
            <person name="Padhi A.K."/>
            <person name="Banerjee K."/>
            <person name="Gomes J."/>
            <person name="Banerjee M."/>
        </authorList>
    </citation>
    <scope>VARIANT ALS9 GLY-46</scope>
    <scope>CHARACTERIZATION OF VARIANT ALS9 GLY-46</scope>
    <scope>MUTAGENESIS OF LEU-59</scope>
    <scope>SUBUNIT</scope>
    <scope>SUBCELLULAR LOCATION</scope>
</reference>
<gene>
    <name evidence="61 64" type="primary">ANG</name>
    <name type="synonym">RNASE5</name>
</gene>
<evidence type="ECO:0000250" key="1">
    <source>
        <dbReference type="UniProtKB" id="P21570"/>
    </source>
</evidence>
<evidence type="ECO:0000269" key="2">
    <source>
    </source>
</evidence>
<evidence type="ECO:0000269" key="3">
    <source>
    </source>
</evidence>
<evidence type="ECO:0000269" key="4">
    <source>
    </source>
</evidence>
<evidence type="ECO:0000269" key="5">
    <source>
    </source>
</evidence>
<evidence type="ECO:0000269" key="6">
    <source>
    </source>
</evidence>
<evidence type="ECO:0000269" key="7">
    <source>
    </source>
</evidence>
<evidence type="ECO:0000269" key="8">
    <source>
    </source>
</evidence>
<evidence type="ECO:0000269" key="9">
    <source>
    </source>
</evidence>
<evidence type="ECO:0000269" key="10">
    <source>
    </source>
</evidence>
<evidence type="ECO:0000269" key="11">
    <source>
    </source>
</evidence>
<evidence type="ECO:0000269" key="12">
    <source>
    </source>
</evidence>
<evidence type="ECO:0000269" key="13">
    <source>
    </source>
</evidence>
<evidence type="ECO:0000269" key="14">
    <source>
    </source>
</evidence>
<evidence type="ECO:0000269" key="15">
    <source>
    </source>
</evidence>
<evidence type="ECO:0000269" key="16">
    <source>
    </source>
</evidence>
<evidence type="ECO:0000269" key="17">
    <source>
    </source>
</evidence>
<evidence type="ECO:0000269" key="18">
    <source>
    </source>
</evidence>
<evidence type="ECO:0000269" key="19">
    <source>
    </source>
</evidence>
<evidence type="ECO:0000269" key="20">
    <source>
    </source>
</evidence>
<evidence type="ECO:0000269" key="21">
    <source>
    </source>
</evidence>
<evidence type="ECO:0000269" key="22">
    <source>
    </source>
</evidence>
<evidence type="ECO:0000269" key="23">
    <source>
    </source>
</evidence>
<evidence type="ECO:0000269" key="24">
    <source>
    </source>
</evidence>
<evidence type="ECO:0000269" key="25">
    <source>
    </source>
</evidence>
<evidence type="ECO:0000269" key="26">
    <source>
    </source>
</evidence>
<evidence type="ECO:0000269" key="27">
    <source>
    </source>
</evidence>
<evidence type="ECO:0000269" key="28">
    <source>
    </source>
</evidence>
<evidence type="ECO:0000269" key="29">
    <source>
    </source>
</evidence>
<evidence type="ECO:0000269" key="30">
    <source>
    </source>
</evidence>
<evidence type="ECO:0000269" key="31">
    <source>
    </source>
</evidence>
<evidence type="ECO:0000269" key="32">
    <source>
    </source>
</evidence>
<evidence type="ECO:0000269" key="33">
    <source>
    </source>
</evidence>
<evidence type="ECO:0000269" key="34">
    <source>
    </source>
</evidence>
<evidence type="ECO:0000269" key="35">
    <source>
    </source>
</evidence>
<evidence type="ECO:0000269" key="36">
    <source>
    </source>
</evidence>
<evidence type="ECO:0000269" key="37">
    <source>
    </source>
</evidence>
<evidence type="ECO:0000269" key="38">
    <source>
    </source>
</evidence>
<evidence type="ECO:0000269" key="39">
    <source>
    </source>
</evidence>
<evidence type="ECO:0000269" key="40">
    <source>
    </source>
</evidence>
<evidence type="ECO:0000269" key="41">
    <source>
    </source>
</evidence>
<evidence type="ECO:0000269" key="42">
    <source>
    </source>
</evidence>
<evidence type="ECO:0000269" key="43">
    <source>
    </source>
</evidence>
<evidence type="ECO:0000269" key="44">
    <source>
    </source>
</evidence>
<evidence type="ECO:0000269" key="45">
    <source>
    </source>
</evidence>
<evidence type="ECO:0000269" key="46">
    <source>
    </source>
</evidence>
<evidence type="ECO:0000269" key="47">
    <source>
    </source>
</evidence>
<evidence type="ECO:0000269" key="48">
    <source>
    </source>
</evidence>
<evidence type="ECO:0000269" key="49">
    <source>
    </source>
</evidence>
<evidence type="ECO:0000269" key="50">
    <source>
    </source>
</evidence>
<evidence type="ECO:0000269" key="51">
    <source>
    </source>
</evidence>
<evidence type="ECO:0000269" key="52">
    <source>
    </source>
</evidence>
<evidence type="ECO:0000269" key="53">
    <source>
    </source>
</evidence>
<evidence type="ECO:0000269" key="54">
    <source>
    </source>
</evidence>
<evidence type="ECO:0000269" key="55">
    <source>
    </source>
</evidence>
<evidence type="ECO:0000269" key="56">
    <source>
    </source>
</evidence>
<evidence type="ECO:0000269" key="57">
    <source>
    </source>
</evidence>
<evidence type="ECO:0000269" key="58">
    <source>
    </source>
</evidence>
<evidence type="ECO:0000269" key="59">
    <source>
    </source>
</evidence>
<evidence type="ECO:0000269" key="60">
    <source>
    </source>
</evidence>
<evidence type="ECO:0000303" key="61">
    <source>
    </source>
</evidence>
<evidence type="ECO:0000303" key="62">
    <source>
    </source>
</evidence>
<evidence type="ECO:0000305" key="63"/>
<evidence type="ECO:0000312" key="64">
    <source>
        <dbReference type="HGNC" id="HGNC:483"/>
    </source>
</evidence>
<evidence type="ECO:0007744" key="65">
    <source>
        <dbReference type="PDB" id="1A4Y"/>
    </source>
</evidence>
<evidence type="ECO:0007744" key="66">
    <source>
        <dbReference type="PDB" id="1ANG"/>
    </source>
</evidence>
<evidence type="ECO:0007744" key="67">
    <source>
        <dbReference type="PDB" id="1AWZ"/>
    </source>
</evidence>
<evidence type="ECO:0007744" key="68">
    <source>
        <dbReference type="PDB" id="1B1E"/>
    </source>
</evidence>
<evidence type="ECO:0007744" key="69">
    <source>
        <dbReference type="PDB" id="1B1I"/>
    </source>
</evidence>
<evidence type="ECO:0007744" key="70">
    <source>
        <dbReference type="PDB" id="1B1J"/>
    </source>
</evidence>
<evidence type="ECO:0007744" key="71">
    <source>
        <dbReference type="PDB" id="1H0D"/>
    </source>
</evidence>
<evidence type="ECO:0007744" key="72">
    <source>
        <dbReference type="PDB" id="1H52"/>
    </source>
</evidence>
<evidence type="ECO:0007744" key="73">
    <source>
        <dbReference type="PDB" id="1H53"/>
    </source>
</evidence>
<evidence type="ECO:0007744" key="74">
    <source>
        <dbReference type="PDB" id="1HBY"/>
    </source>
</evidence>
<evidence type="ECO:0007744" key="75">
    <source>
        <dbReference type="PDB" id="1K58"/>
    </source>
</evidence>
<evidence type="ECO:0007744" key="76">
    <source>
        <dbReference type="PDB" id="1K59"/>
    </source>
</evidence>
<evidence type="ECO:0007744" key="77">
    <source>
        <dbReference type="PDB" id="1K5A"/>
    </source>
</evidence>
<evidence type="ECO:0007744" key="78">
    <source>
        <dbReference type="PDB" id="1K5B"/>
    </source>
</evidence>
<evidence type="ECO:0007744" key="79">
    <source>
        <dbReference type="PDB" id="1UN3"/>
    </source>
</evidence>
<evidence type="ECO:0007744" key="80">
    <source>
        <dbReference type="PDB" id="1UN4"/>
    </source>
</evidence>
<evidence type="ECO:0007744" key="81">
    <source>
        <dbReference type="PDB" id="1UN5"/>
    </source>
</evidence>
<evidence type="ECO:0007744" key="82">
    <source>
        <dbReference type="PDB" id="2ANG"/>
    </source>
</evidence>
<evidence type="ECO:0007744" key="83">
    <source>
        <dbReference type="PDB" id="4AHD"/>
    </source>
</evidence>
<evidence type="ECO:0007744" key="84">
    <source>
        <dbReference type="PDB" id="4AHE"/>
    </source>
</evidence>
<evidence type="ECO:0007744" key="85">
    <source>
        <dbReference type="PDB" id="4AHF"/>
    </source>
</evidence>
<evidence type="ECO:0007744" key="86">
    <source>
        <dbReference type="PDB" id="4AHG"/>
    </source>
</evidence>
<evidence type="ECO:0007744" key="87">
    <source>
        <dbReference type="PDB" id="4AHH"/>
    </source>
</evidence>
<evidence type="ECO:0007744" key="88">
    <source>
        <dbReference type="PDB" id="4AHI"/>
    </source>
</evidence>
<evidence type="ECO:0007744" key="89">
    <source>
        <dbReference type="PDB" id="4AHJ"/>
    </source>
</evidence>
<evidence type="ECO:0007744" key="90">
    <source>
        <dbReference type="PDB" id="4AHK"/>
    </source>
</evidence>
<evidence type="ECO:0007744" key="91">
    <source>
        <dbReference type="PDB" id="4AHL"/>
    </source>
</evidence>
<evidence type="ECO:0007744" key="92">
    <source>
        <dbReference type="PDB" id="4AHM"/>
    </source>
</evidence>
<evidence type="ECO:0007744" key="93">
    <source>
        <dbReference type="PDB" id="4AHN"/>
    </source>
</evidence>
<evidence type="ECO:0007744" key="94">
    <source>
        <dbReference type="PDB" id="4AOH"/>
    </source>
</evidence>
<evidence type="ECO:0007744" key="95">
    <source>
        <dbReference type="PDB" id="4B36"/>
    </source>
</evidence>
<evidence type="ECO:0007744" key="96">
    <source>
        <dbReference type="PDB" id="5EOP"/>
    </source>
</evidence>
<evidence type="ECO:0007744" key="97">
    <source>
        <dbReference type="PDB" id="5EPZ"/>
    </source>
</evidence>
<evidence type="ECO:0007744" key="98">
    <source>
        <dbReference type="PDB" id="5EQO"/>
    </source>
</evidence>
<evidence type="ECO:0007744" key="99">
    <source>
        <dbReference type="PDB" id="5M9A"/>
    </source>
</evidence>
<evidence type="ECO:0007744" key="100">
    <source>
        <dbReference type="PDB" id="5M9C"/>
    </source>
</evidence>
<evidence type="ECO:0007744" key="101">
    <source>
        <dbReference type="PDB" id="5M9G"/>
    </source>
</evidence>
<evidence type="ECO:0007744" key="102">
    <source>
        <dbReference type="PDB" id="5M9J"/>
    </source>
</evidence>
<evidence type="ECO:0007744" key="103">
    <source>
        <dbReference type="PDB" id="5M9M"/>
    </source>
</evidence>
<evidence type="ECO:0007744" key="104">
    <source>
        <dbReference type="PDB" id="5M9P"/>
    </source>
</evidence>
<evidence type="ECO:0007744" key="105">
    <source>
        <dbReference type="PDB" id="5M9Q"/>
    </source>
</evidence>
<evidence type="ECO:0007744" key="106">
    <source>
        <dbReference type="PDB" id="5M9R"/>
    </source>
</evidence>
<evidence type="ECO:0007744" key="107">
    <source>
        <dbReference type="PDB" id="5M9S"/>
    </source>
</evidence>
<evidence type="ECO:0007744" key="108">
    <source>
        <dbReference type="PDB" id="5M9T"/>
    </source>
</evidence>
<evidence type="ECO:0007744" key="109">
    <source>
        <dbReference type="PDB" id="5M9V"/>
    </source>
</evidence>
<evidence type="ECO:0007744" key="110">
    <source>
        <dbReference type="PDB" id="7NPM"/>
    </source>
</evidence>
<evidence type="ECO:0007744" key="111">
    <source>
        <dbReference type="PDB" id="7PNJ"/>
    </source>
</evidence>
<evidence type="ECO:0007744" key="112">
    <source>
        <dbReference type="PDB" id="7PNP"/>
    </source>
</evidence>
<evidence type="ECO:0007744" key="113">
    <source>
        <dbReference type="PDB" id="7PNR"/>
    </source>
</evidence>
<evidence type="ECO:0007744" key="114">
    <source>
        <dbReference type="PDB" id="8AF0"/>
    </source>
</evidence>
<evidence type="ECO:0007829" key="115">
    <source>
        <dbReference type="PDB" id="4AOH"/>
    </source>
</evidence>
<proteinExistence type="evidence at protein level"/>
<dbReference type="EC" id="3.1.27.-" evidence="8 23 29 31 35 47"/>
<dbReference type="EMBL" id="M11567">
    <property type="protein sequence ID" value="AAA51678.1"/>
    <property type="molecule type" value="Genomic_DNA"/>
</dbReference>
<dbReference type="EMBL" id="AF449647">
    <property type="protein sequence ID" value="AAL67710.1"/>
    <property type="molecule type" value="Genomic_DNA"/>
</dbReference>
<dbReference type="EMBL" id="AF449648">
    <property type="protein sequence ID" value="AAL67711.1"/>
    <property type="molecule type" value="Genomic_DNA"/>
</dbReference>
<dbReference type="EMBL" id="AF449649">
    <property type="protein sequence ID" value="AAL67712.1"/>
    <property type="molecule type" value="Genomic_DNA"/>
</dbReference>
<dbReference type="EMBL" id="AF449650">
    <property type="protein sequence ID" value="AAL67713.1"/>
    <property type="molecule type" value="Genomic_DNA"/>
</dbReference>
<dbReference type="EMBL" id="AF449651">
    <property type="protein sequence ID" value="AAL67714.1"/>
    <property type="molecule type" value="Genomic_DNA"/>
</dbReference>
<dbReference type="EMBL" id="FJ236304">
    <property type="protein sequence ID" value="ACI45236.1"/>
    <property type="molecule type" value="mRNA"/>
</dbReference>
<dbReference type="EMBL" id="CR407633">
    <property type="protein sequence ID" value="CAG28561.1"/>
    <property type="molecule type" value="mRNA"/>
</dbReference>
<dbReference type="EMBL" id="AK313989">
    <property type="protein sequence ID" value="BAG36701.1"/>
    <property type="molecule type" value="mRNA"/>
</dbReference>
<dbReference type="EMBL" id="CH471078">
    <property type="protein sequence ID" value="EAW66450.1"/>
    <property type="molecule type" value="Genomic_DNA"/>
</dbReference>
<dbReference type="EMBL" id="CH471078">
    <property type="protein sequence ID" value="EAW66451.1"/>
    <property type="molecule type" value="Genomic_DNA"/>
</dbReference>
<dbReference type="EMBL" id="BC020704">
    <property type="protein sequence ID" value="AAH20704.1"/>
    <property type="status" value="ALT_INIT"/>
    <property type="molecule type" value="mRNA"/>
</dbReference>
<dbReference type="EMBL" id="BC054880">
    <property type="protein sequence ID" value="AAH54880.1"/>
    <property type="molecule type" value="mRNA"/>
</dbReference>
<dbReference type="EMBL" id="BC062698">
    <property type="protein sequence ID" value="AAH62698.1"/>
    <property type="molecule type" value="mRNA"/>
</dbReference>
<dbReference type="CCDS" id="CCDS9554.1"/>
<dbReference type="PIR" id="A90498">
    <property type="entry name" value="NRHUAG"/>
</dbReference>
<dbReference type="RefSeq" id="NP_001091046.1">
    <property type="nucleotide sequence ID" value="NM_001097577.3"/>
</dbReference>
<dbReference type="RefSeq" id="NP_001136.1">
    <property type="nucleotide sequence ID" value="NM_001145.4"/>
</dbReference>
<dbReference type="RefSeq" id="NP_001372200.1">
    <property type="nucleotide sequence ID" value="NM_001385271.1"/>
</dbReference>
<dbReference type="RefSeq" id="NP_001372201.1">
    <property type="nucleotide sequence ID" value="NM_001385272.1"/>
</dbReference>
<dbReference type="RefSeq" id="NP_001372202.1">
    <property type="nucleotide sequence ID" value="NM_001385273.1"/>
</dbReference>
<dbReference type="RefSeq" id="NP_001372203.1">
    <property type="nucleotide sequence ID" value="NM_001385274.1"/>
</dbReference>
<dbReference type="PDB" id="1A4Y">
    <property type="method" value="X-ray"/>
    <property type="resolution" value="2.00 A"/>
    <property type="chains" value="B/E=25-147"/>
</dbReference>
<dbReference type="PDB" id="1ANG">
    <property type="method" value="X-ray"/>
    <property type="resolution" value="2.40 A"/>
    <property type="chains" value="A=25-147"/>
</dbReference>
<dbReference type="PDB" id="1AWZ">
    <property type="method" value="NMR"/>
    <property type="chains" value="A=25-147"/>
</dbReference>
<dbReference type="PDB" id="1B1E">
    <property type="method" value="X-ray"/>
    <property type="resolution" value="2.00 A"/>
    <property type="chains" value="A=25-147"/>
</dbReference>
<dbReference type="PDB" id="1B1I">
    <property type="method" value="X-ray"/>
    <property type="resolution" value="1.80 A"/>
    <property type="chains" value="A=26-147"/>
</dbReference>
<dbReference type="PDB" id="1B1J">
    <property type="method" value="X-ray"/>
    <property type="resolution" value="2.00 A"/>
    <property type="chains" value="A=25-147"/>
</dbReference>
<dbReference type="PDB" id="1GV7">
    <property type="method" value="X-ray"/>
    <property type="resolution" value="2.10 A"/>
    <property type="chains" value="A=26-145"/>
</dbReference>
<dbReference type="PDB" id="1H0D">
    <property type="method" value="X-ray"/>
    <property type="resolution" value="2.00 A"/>
    <property type="chains" value="C=26-147"/>
</dbReference>
<dbReference type="PDB" id="1H52">
    <property type="method" value="X-ray"/>
    <property type="resolution" value="2.00 A"/>
    <property type="chains" value="A=25-147"/>
</dbReference>
<dbReference type="PDB" id="1H53">
    <property type="method" value="X-ray"/>
    <property type="resolution" value="2.00 A"/>
    <property type="chains" value="A=26-147"/>
</dbReference>
<dbReference type="PDB" id="1HBY">
    <property type="method" value="X-ray"/>
    <property type="resolution" value="2.00 A"/>
    <property type="chains" value="A=25-147"/>
</dbReference>
<dbReference type="PDB" id="1K58">
    <property type="method" value="X-ray"/>
    <property type="resolution" value="2.70 A"/>
    <property type="chains" value="A=25-147"/>
</dbReference>
<dbReference type="PDB" id="1K59">
    <property type="method" value="X-ray"/>
    <property type="resolution" value="1.80 A"/>
    <property type="chains" value="A=25-147"/>
</dbReference>
<dbReference type="PDB" id="1K5A">
    <property type="method" value="X-ray"/>
    <property type="resolution" value="2.33 A"/>
    <property type="chains" value="A=25-147"/>
</dbReference>
<dbReference type="PDB" id="1K5B">
    <property type="method" value="X-ray"/>
    <property type="resolution" value="1.80 A"/>
    <property type="chains" value="A=25-144"/>
</dbReference>
<dbReference type="PDB" id="1UN3">
    <property type="method" value="X-ray"/>
    <property type="resolution" value="1.70 A"/>
    <property type="chains" value="A=26-147"/>
</dbReference>
<dbReference type="PDB" id="1UN4">
    <property type="method" value="X-ray"/>
    <property type="resolution" value="2.10 A"/>
    <property type="chains" value="A=26-147"/>
</dbReference>
<dbReference type="PDB" id="1UN5">
    <property type="method" value="X-ray"/>
    <property type="resolution" value="2.60 A"/>
    <property type="chains" value="A=25-147"/>
</dbReference>
<dbReference type="PDB" id="2ANG">
    <property type="method" value="X-ray"/>
    <property type="resolution" value="2.00 A"/>
    <property type="chains" value="A=25-147"/>
</dbReference>
<dbReference type="PDB" id="4AHD">
    <property type="method" value="X-ray"/>
    <property type="resolution" value="2.47 A"/>
    <property type="chains" value="A/B=25-147"/>
</dbReference>
<dbReference type="PDB" id="4AHE">
    <property type="method" value="X-ray"/>
    <property type="resolution" value="2.08 A"/>
    <property type="chains" value="A=25-147"/>
</dbReference>
<dbReference type="PDB" id="4AHF">
    <property type="method" value="X-ray"/>
    <property type="resolution" value="2.12 A"/>
    <property type="chains" value="A=25-147"/>
</dbReference>
<dbReference type="PDB" id="4AHG">
    <property type="method" value="X-ray"/>
    <property type="resolution" value="2.45 A"/>
    <property type="chains" value="A=25-147"/>
</dbReference>
<dbReference type="PDB" id="4AHH">
    <property type="method" value="X-ray"/>
    <property type="resolution" value="2.50 A"/>
    <property type="chains" value="A=25-147"/>
</dbReference>
<dbReference type="PDB" id="4AHI">
    <property type="method" value="X-ray"/>
    <property type="resolution" value="2.80 A"/>
    <property type="chains" value="A=25-147"/>
</dbReference>
<dbReference type="PDB" id="4AHJ">
    <property type="method" value="X-ray"/>
    <property type="resolution" value="2.03 A"/>
    <property type="chains" value="A=25-147"/>
</dbReference>
<dbReference type="PDB" id="4AHK">
    <property type="method" value="X-ray"/>
    <property type="resolution" value="1.97 A"/>
    <property type="chains" value="A/B=25-147"/>
</dbReference>
<dbReference type="PDB" id="4AHL">
    <property type="method" value="X-ray"/>
    <property type="resolution" value="2.05 A"/>
    <property type="chains" value="A=25-147"/>
</dbReference>
<dbReference type="PDB" id="4AHM">
    <property type="method" value="X-ray"/>
    <property type="resolution" value="1.96 A"/>
    <property type="chains" value="A=25-147"/>
</dbReference>
<dbReference type="PDB" id="4AHN">
    <property type="method" value="X-ray"/>
    <property type="resolution" value="2.98 A"/>
    <property type="chains" value="A=25-147"/>
</dbReference>
<dbReference type="PDB" id="4AOH">
    <property type="method" value="X-ray"/>
    <property type="resolution" value="1.04 A"/>
    <property type="chains" value="A=24-147"/>
</dbReference>
<dbReference type="PDB" id="4B36">
    <property type="method" value="X-ray"/>
    <property type="resolution" value="1.76 A"/>
    <property type="chains" value="A/B=25-147"/>
</dbReference>
<dbReference type="PDB" id="5EOP">
    <property type="method" value="X-ray"/>
    <property type="resolution" value="1.35 A"/>
    <property type="chains" value="A=26-146"/>
</dbReference>
<dbReference type="PDB" id="5EPZ">
    <property type="method" value="X-ray"/>
    <property type="resolution" value="1.85 A"/>
    <property type="chains" value="A=26-145"/>
</dbReference>
<dbReference type="PDB" id="5EQO">
    <property type="method" value="X-ray"/>
    <property type="resolution" value="2.40 A"/>
    <property type="chains" value="A=25-145"/>
</dbReference>
<dbReference type="PDB" id="5M9A">
    <property type="method" value="X-ray"/>
    <property type="resolution" value="1.95 A"/>
    <property type="chains" value="A=25-147"/>
</dbReference>
<dbReference type="PDB" id="5M9C">
    <property type="method" value="X-ray"/>
    <property type="resolution" value="2.05 A"/>
    <property type="chains" value="A=25-147"/>
</dbReference>
<dbReference type="PDB" id="5M9G">
    <property type="method" value="X-ray"/>
    <property type="resolution" value="2.28 A"/>
    <property type="chains" value="A=25-147"/>
</dbReference>
<dbReference type="PDB" id="5M9J">
    <property type="method" value="X-ray"/>
    <property type="resolution" value="1.90 A"/>
    <property type="chains" value="A=25-147"/>
</dbReference>
<dbReference type="PDB" id="5M9M">
    <property type="method" value="X-ray"/>
    <property type="resolution" value="1.65 A"/>
    <property type="chains" value="A/B/C/D=25-147"/>
</dbReference>
<dbReference type="PDB" id="5M9P">
    <property type="method" value="X-ray"/>
    <property type="resolution" value="1.80 A"/>
    <property type="chains" value="A=25-147"/>
</dbReference>
<dbReference type="PDB" id="5M9Q">
    <property type="method" value="X-ray"/>
    <property type="resolution" value="1.35 A"/>
    <property type="chains" value="A=25-147"/>
</dbReference>
<dbReference type="PDB" id="5M9R">
    <property type="method" value="X-ray"/>
    <property type="resolution" value="1.44 A"/>
    <property type="chains" value="A/B=25-147"/>
</dbReference>
<dbReference type="PDB" id="5M9S">
    <property type="method" value="X-ray"/>
    <property type="resolution" value="1.85 A"/>
    <property type="chains" value="A=25-147"/>
</dbReference>
<dbReference type="PDB" id="5M9T">
    <property type="method" value="X-ray"/>
    <property type="resolution" value="2.20 A"/>
    <property type="chains" value="A/B=25-147"/>
</dbReference>
<dbReference type="PDB" id="5M9V">
    <property type="method" value="X-ray"/>
    <property type="resolution" value="1.70 A"/>
    <property type="chains" value="A=25-147"/>
</dbReference>
<dbReference type="PDB" id="7NPM">
    <property type="method" value="X-ray"/>
    <property type="resolution" value="1.86 A"/>
    <property type="chains" value="AAA=26-146"/>
</dbReference>
<dbReference type="PDB" id="7PNJ">
    <property type="method" value="X-ray"/>
    <property type="resolution" value="3.10 A"/>
    <property type="chains" value="A=25-145"/>
</dbReference>
<dbReference type="PDB" id="7PNP">
    <property type="method" value="X-ray"/>
    <property type="resolution" value="1.80 A"/>
    <property type="chains" value="A=25-147"/>
</dbReference>
<dbReference type="PDB" id="7PNR">
    <property type="method" value="X-ray"/>
    <property type="resolution" value="1.60 A"/>
    <property type="chains" value="A=25-145"/>
</dbReference>
<dbReference type="PDB" id="8AF0">
    <property type="method" value="X-ray"/>
    <property type="resolution" value="2.43 A"/>
    <property type="chains" value="A/B=25-147"/>
</dbReference>
<dbReference type="PDB" id="9BDL">
    <property type="method" value="EM"/>
    <property type="resolution" value="2.80 A"/>
    <property type="chains" value="ANG=1-147"/>
</dbReference>
<dbReference type="PDB" id="9BDN">
    <property type="method" value="EM"/>
    <property type="resolution" value="3.10 A"/>
    <property type="chains" value="ANG=1-147"/>
</dbReference>
<dbReference type="PDB" id="9BDP">
    <property type="method" value="EM"/>
    <property type="resolution" value="3.70 A"/>
    <property type="chains" value="ANG=1-147"/>
</dbReference>
<dbReference type="PDBsum" id="1A4Y"/>
<dbReference type="PDBsum" id="1ANG"/>
<dbReference type="PDBsum" id="1AWZ"/>
<dbReference type="PDBsum" id="1B1E"/>
<dbReference type="PDBsum" id="1B1I"/>
<dbReference type="PDBsum" id="1B1J"/>
<dbReference type="PDBsum" id="1GV7"/>
<dbReference type="PDBsum" id="1H0D"/>
<dbReference type="PDBsum" id="1H52"/>
<dbReference type="PDBsum" id="1H53"/>
<dbReference type="PDBsum" id="1HBY"/>
<dbReference type="PDBsum" id="1K58"/>
<dbReference type="PDBsum" id="1K59"/>
<dbReference type="PDBsum" id="1K5A"/>
<dbReference type="PDBsum" id="1K5B"/>
<dbReference type="PDBsum" id="1UN3"/>
<dbReference type="PDBsum" id="1UN4"/>
<dbReference type="PDBsum" id="1UN5"/>
<dbReference type="PDBsum" id="2ANG"/>
<dbReference type="PDBsum" id="4AHD"/>
<dbReference type="PDBsum" id="4AHE"/>
<dbReference type="PDBsum" id="4AHF"/>
<dbReference type="PDBsum" id="4AHG"/>
<dbReference type="PDBsum" id="4AHH"/>
<dbReference type="PDBsum" id="4AHI"/>
<dbReference type="PDBsum" id="4AHJ"/>
<dbReference type="PDBsum" id="4AHK"/>
<dbReference type="PDBsum" id="4AHL"/>
<dbReference type="PDBsum" id="4AHM"/>
<dbReference type="PDBsum" id="4AHN"/>
<dbReference type="PDBsum" id="4AOH"/>
<dbReference type="PDBsum" id="4B36"/>
<dbReference type="PDBsum" id="5EOP"/>
<dbReference type="PDBsum" id="5EPZ"/>
<dbReference type="PDBsum" id="5EQO"/>
<dbReference type="PDBsum" id="5M9A"/>
<dbReference type="PDBsum" id="5M9C"/>
<dbReference type="PDBsum" id="5M9G"/>
<dbReference type="PDBsum" id="5M9J"/>
<dbReference type="PDBsum" id="5M9M"/>
<dbReference type="PDBsum" id="5M9P"/>
<dbReference type="PDBsum" id="5M9Q"/>
<dbReference type="PDBsum" id="5M9R"/>
<dbReference type="PDBsum" id="5M9S"/>
<dbReference type="PDBsum" id="5M9T"/>
<dbReference type="PDBsum" id="5M9V"/>
<dbReference type="PDBsum" id="7NPM"/>
<dbReference type="PDBsum" id="7PNJ"/>
<dbReference type="PDBsum" id="7PNP"/>
<dbReference type="PDBsum" id="7PNR"/>
<dbReference type="PDBsum" id="8AF0"/>
<dbReference type="PDBsum" id="9BDL"/>
<dbReference type="PDBsum" id="9BDN"/>
<dbReference type="PDBsum" id="9BDP"/>
<dbReference type="EMDB" id="EMD-44461"/>
<dbReference type="EMDB" id="EMD-44463"/>
<dbReference type="EMDB" id="EMD-44464"/>
<dbReference type="SMR" id="P03950"/>
<dbReference type="BioGRID" id="106780">
    <property type="interactions" value="9"/>
</dbReference>
<dbReference type="CORUM" id="P03950"/>
<dbReference type="FunCoup" id="P03950">
    <property type="interactions" value="165"/>
</dbReference>
<dbReference type="IntAct" id="P03950">
    <property type="interactions" value="125"/>
</dbReference>
<dbReference type="MINT" id="P03950"/>
<dbReference type="STRING" id="9606.ENSP00000336762"/>
<dbReference type="BindingDB" id="P03950"/>
<dbReference type="ChEMBL" id="CHEMBL5829"/>
<dbReference type="DrugBank" id="DB09130">
    <property type="generic name" value="Copper"/>
</dbReference>
<dbReference type="GlyGen" id="P03950">
    <property type="glycosylation" value="2 sites, 1 O-linked glycan (1 site)"/>
</dbReference>
<dbReference type="iPTMnet" id="P03950"/>
<dbReference type="PhosphoSitePlus" id="P03950"/>
<dbReference type="BioMuta" id="ANG"/>
<dbReference type="DMDM" id="113873"/>
<dbReference type="jPOST" id="P03950"/>
<dbReference type="MassIVE" id="P03950"/>
<dbReference type="PaxDb" id="9606-ENSP00000336762"/>
<dbReference type="PeptideAtlas" id="P03950"/>
<dbReference type="ProteomicsDB" id="51619"/>
<dbReference type="TopDownProteomics" id="P03950"/>
<dbReference type="ABCD" id="P03950">
    <property type="antibodies" value="1 sequenced antibody"/>
</dbReference>
<dbReference type="Antibodypedia" id="22061">
    <property type="antibodies" value="468 antibodies from 35 providers"/>
</dbReference>
<dbReference type="DNASU" id="283"/>
<dbReference type="Ensembl" id="ENST00000336811.10">
    <property type="protein sequence ID" value="ENSP00000336762.6"/>
    <property type="gene ID" value="ENSG00000214274.10"/>
</dbReference>
<dbReference type="Ensembl" id="ENST00000397990.5">
    <property type="protein sequence ID" value="ENSP00000381077.4"/>
    <property type="gene ID" value="ENSG00000214274.10"/>
</dbReference>
<dbReference type="GeneID" id="283"/>
<dbReference type="KEGG" id="hsa:283"/>
<dbReference type="MANE-Select" id="ENST00000397990.5">
    <property type="protein sequence ID" value="ENSP00000381077.4"/>
    <property type="RefSeq nucleotide sequence ID" value="NM_001097577.3"/>
    <property type="RefSeq protein sequence ID" value="NP_001091046.1"/>
</dbReference>
<dbReference type="AGR" id="HGNC:483"/>
<dbReference type="CTD" id="283"/>
<dbReference type="DisGeNET" id="283"/>
<dbReference type="GeneCards" id="ANG"/>
<dbReference type="HGNC" id="HGNC:483">
    <property type="gene designation" value="ANG"/>
</dbReference>
<dbReference type="HPA" id="ENSG00000214274">
    <property type="expression patterns" value="Tissue enriched (liver)"/>
</dbReference>
<dbReference type="MalaCards" id="ANG"/>
<dbReference type="MIM" id="105850">
    <property type="type" value="gene"/>
</dbReference>
<dbReference type="MIM" id="611895">
    <property type="type" value="phenotype"/>
</dbReference>
<dbReference type="neXtProt" id="NX_P03950"/>
<dbReference type="OpenTargets" id="ENSG00000214274"/>
<dbReference type="Orphanet" id="803">
    <property type="disease" value="Amyotrophic lateral sclerosis"/>
</dbReference>
<dbReference type="PharmGKB" id="PA24790"/>
<dbReference type="VEuPathDB" id="HostDB:ENSG00000214274"/>
<dbReference type="eggNOG" id="ENOG502S9Q1">
    <property type="taxonomic scope" value="Eukaryota"/>
</dbReference>
<dbReference type="GeneTree" id="ENSGT00940000162981"/>
<dbReference type="HOGENOM" id="CLU_117006_3_1_1"/>
<dbReference type="InParanoid" id="P03950"/>
<dbReference type="OMA" id="FIHGNKG"/>
<dbReference type="OrthoDB" id="8573660at2759"/>
<dbReference type="PAN-GO" id="P03950">
    <property type="GO annotations" value="7 GO annotations based on evolutionary models"/>
</dbReference>
<dbReference type="PhylomeDB" id="P03950"/>
<dbReference type="TreeFam" id="TF333393"/>
<dbReference type="PathwayCommons" id="P03950"/>
<dbReference type="Reactome" id="R-HSA-418990">
    <property type="pathway name" value="Adherens junctions interactions"/>
</dbReference>
<dbReference type="Reactome" id="R-HSA-9708296">
    <property type="pathway name" value="tRNA-derived small RNA (tsRNA or tRNA-related fragment, tRF) biogenesis"/>
</dbReference>
<dbReference type="SABIO-RK" id="P03950"/>
<dbReference type="SignaLink" id="P03950"/>
<dbReference type="SIGNOR" id="P03950"/>
<dbReference type="BioGRID-ORCS" id="283">
    <property type="hits" value="19 hits in 1148 CRISPR screens"/>
</dbReference>
<dbReference type="CD-CODE" id="DEE660B4">
    <property type="entry name" value="Stress granule"/>
</dbReference>
<dbReference type="EvolutionaryTrace" id="P03950"/>
<dbReference type="GeneWiki" id="Angiogenin"/>
<dbReference type="GenomeRNAi" id="283"/>
<dbReference type="Pharos" id="P03950">
    <property type="development level" value="Tbio"/>
</dbReference>
<dbReference type="PRO" id="PR:P03950"/>
<dbReference type="Proteomes" id="UP000005640">
    <property type="component" value="Chromosome 14"/>
</dbReference>
<dbReference type="RNAct" id="P03950">
    <property type="molecule type" value="protein"/>
</dbReference>
<dbReference type="Bgee" id="ENSG00000214274">
    <property type="expression patterns" value="Expressed in right lobe of liver and 158 other cell types or tissues"/>
</dbReference>
<dbReference type="ExpressionAtlas" id="P03950">
    <property type="expression patterns" value="baseline and differential"/>
</dbReference>
<dbReference type="GO" id="GO:0015629">
    <property type="term" value="C:actin cytoskeleton"/>
    <property type="evidence" value="ECO:0000314"/>
    <property type="project" value="HPA"/>
</dbReference>
<dbReference type="GO" id="GO:0032311">
    <property type="term" value="C:angiogenin-PRI complex"/>
    <property type="evidence" value="ECO:0000314"/>
    <property type="project" value="MGI"/>
</dbReference>
<dbReference type="GO" id="GO:0005604">
    <property type="term" value="C:basement membrane"/>
    <property type="evidence" value="ECO:0000314"/>
    <property type="project" value="UniProtKB"/>
</dbReference>
<dbReference type="GO" id="GO:0005694">
    <property type="term" value="C:chromosome"/>
    <property type="evidence" value="ECO:0000314"/>
    <property type="project" value="HPA"/>
</dbReference>
<dbReference type="GO" id="GO:0005737">
    <property type="term" value="C:cytoplasm"/>
    <property type="evidence" value="ECO:0000314"/>
    <property type="project" value="UniProtKB"/>
</dbReference>
<dbReference type="GO" id="GO:0010494">
    <property type="term" value="C:cytoplasmic stress granule"/>
    <property type="evidence" value="ECO:0000314"/>
    <property type="project" value="UniProtKB"/>
</dbReference>
<dbReference type="GO" id="GO:0005829">
    <property type="term" value="C:cytosol"/>
    <property type="evidence" value="ECO:0000304"/>
    <property type="project" value="Reactome"/>
</dbReference>
<dbReference type="GO" id="GO:0030139">
    <property type="term" value="C:endocytic vesicle"/>
    <property type="evidence" value="ECO:0000314"/>
    <property type="project" value="UniProtKB"/>
</dbReference>
<dbReference type="GO" id="GO:0005576">
    <property type="term" value="C:extracellular region"/>
    <property type="evidence" value="ECO:0000304"/>
    <property type="project" value="Reactome"/>
</dbReference>
<dbReference type="GO" id="GO:0005615">
    <property type="term" value="C:extracellular space"/>
    <property type="evidence" value="ECO:0000314"/>
    <property type="project" value="UniProtKB"/>
</dbReference>
<dbReference type="GO" id="GO:0030426">
    <property type="term" value="C:growth cone"/>
    <property type="evidence" value="ECO:0000250"/>
    <property type="project" value="UniProtKB"/>
</dbReference>
<dbReference type="GO" id="GO:0043025">
    <property type="term" value="C:neuronal cell body"/>
    <property type="evidence" value="ECO:0000250"/>
    <property type="project" value="UniProtKB"/>
</dbReference>
<dbReference type="GO" id="GO:0005730">
    <property type="term" value="C:nucleolus"/>
    <property type="evidence" value="ECO:0000314"/>
    <property type="project" value="HPA"/>
</dbReference>
<dbReference type="GO" id="GO:0005634">
    <property type="term" value="C:nucleus"/>
    <property type="evidence" value="ECO:0000314"/>
    <property type="project" value="UniProtKB"/>
</dbReference>
<dbReference type="GO" id="GO:0003779">
    <property type="term" value="F:actin binding"/>
    <property type="evidence" value="ECO:0000314"/>
    <property type="project" value="UniProtKB"/>
</dbReference>
<dbReference type="GO" id="GO:0005507">
    <property type="term" value="F:copper ion binding"/>
    <property type="evidence" value="ECO:0000314"/>
    <property type="project" value="UniProtKB"/>
</dbReference>
<dbReference type="GO" id="GO:0003677">
    <property type="term" value="F:DNA binding"/>
    <property type="evidence" value="ECO:0000305"/>
    <property type="project" value="UniProtKB"/>
</dbReference>
<dbReference type="GO" id="GO:0004519">
    <property type="term" value="F:endonuclease activity"/>
    <property type="evidence" value="ECO:0000304"/>
    <property type="project" value="UniProtKB"/>
</dbReference>
<dbReference type="GO" id="GO:0008201">
    <property type="term" value="F:heparin binding"/>
    <property type="evidence" value="ECO:0000314"/>
    <property type="project" value="UniProtKB"/>
</dbReference>
<dbReference type="GO" id="GO:0042277">
    <property type="term" value="F:peptide binding"/>
    <property type="evidence" value="ECO:0000314"/>
    <property type="project" value="UniProtKB"/>
</dbReference>
<dbReference type="GO" id="GO:0042803">
    <property type="term" value="F:protein homodimerization activity"/>
    <property type="evidence" value="ECO:0000314"/>
    <property type="project" value="UniProtKB"/>
</dbReference>
<dbReference type="GO" id="GO:0048018">
    <property type="term" value="F:receptor ligand activity"/>
    <property type="evidence" value="ECO:0000314"/>
    <property type="project" value="UniProt"/>
</dbReference>
<dbReference type="GO" id="GO:0043022">
    <property type="term" value="F:ribosome binding"/>
    <property type="evidence" value="ECO:0000314"/>
    <property type="project" value="UniProtKB"/>
</dbReference>
<dbReference type="GO" id="GO:0004521">
    <property type="term" value="F:RNA endonuclease activity"/>
    <property type="evidence" value="ECO:0000304"/>
    <property type="project" value="Reactome"/>
</dbReference>
<dbReference type="GO" id="GO:0004540">
    <property type="term" value="F:RNA nuclease activity"/>
    <property type="evidence" value="ECO:0000314"/>
    <property type="project" value="UniProtKB"/>
</dbReference>
<dbReference type="GO" id="GO:0019843">
    <property type="term" value="F:rRNA binding"/>
    <property type="evidence" value="ECO:0000304"/>
    <property type="project" value="UniProtKB"/>
</dbReference>
<dbReference type="GO" id="GO:0005102">
    <property type="term" value="F:signaling receptor binding"/>
    <property type="evidence" value="ECO:0000314"/>
    <property type="project" value="UniProtKB"/>
</dbReference>
<dbReference type="GO" id="GO:0004549">
    <property type="term" value="F:tRNA-specific ribonuclease activity"/>
    <property type="evidence" value="ECO:0000314"/>
    <property type="project" value="UniProtKB"/>
</dbReference>
<dbReference type="GO" id="GO:0030041">
    <property type="term" value="P:actin filament polymerization"/>
    <property type="evidence" value="ECO:0000250"/>
    <property type="project" value="UniProtKB"/>
</dbReference>
<dbReference type="GO" id="GO:0001525">
    <property type="term" value="P:angiogenesis"/>
    <property type="evidence" value="ECO:0000314"/>
    <property type="project" value="UniProtKB"/>
</dbReference>
<dbReference type="GO" id="GO:0019731">
    <property type="term" value="P:antibacterial humoral response"/>
    <property type="evidence" value="ECO:0000318"/>
    <property type="project" value="GO_Central"/>
</dbReference>
<dbReference type="GO" id="GO:0061844">
    <property type="term" value="P:antimicrobial humoral immune response mediated by antimicrobial peptide"/>
    <property type="evidence" value="ECO:0000318"/>
    <property type="project" value="GO_Central"/>
</dbReference>
<dbReference type="GO" id="GO:0007154">
    <property type="term" value="P:cell communication"/>
    <property type="evidence" value="ECO:0000303"/>
    <property type="project" value="UniProtKB"/>
</dbReference>
<dbReference type="GO" id="GO:0016477">
    <property type="term" value="P:cell migration"/>
    <property type="evidence" value="ECO:0000315"/>
    <property type="project" value="UniProtKB"/>
</dbReference>
<dbReference type="GO" id="GO:0050830">
    <property type="term" value="P:defense response to Gram-positive bacterium"/>
    <property type="evidence" value="ECO:0000318"/>
    <property type="project" value="GO_Central"/>
</dbReference>
<dbReference type="GO" id="GO:0071425">
    <property type="term" value="P:hematopoietic stem cell proliferation"/>
    <property type="evidence" value="ECO:0000314"/>
    <property type="project" value="UniProtKB"/>
</dbReference>
<dbReference type="GO" id="GO:0042592">
    <property type="term" value="P:homeostatic process"/>
    <property type="evidence" value="ECO:0000303"/>
    <property type="project" value="UniProtKB"/>
</dbReference>
<dbReference type="GO" id="GO:0045087">
    <property type="term" value="P:innate immune response"/>
    <property type="evidence" value="ECO:0000318"/>
    <property type="project" value="GO_Central"/>
</dbReference>
<dbReference type="GO" id="GO:0043066">
    <property type="term" value="P:negative regulation of apoptotic process"/>
    <property type="evidence" value="ECO:0000250"/>
    <property type="project" value="UniProtKB"/>
</dbReference>
<dbReference type="GO" id="GO:0048662">
    <property type="term" value="P:negative regulation of smooth muscle cell proliferation"/>
    <property type="evidence" value="ECO:0000314"/>
    <property type="project" value="UniProtKB"/>
</dbReference>
<dbReference type="GO" id="GO:0032055">
    <property type="term" value="P:negative regulation of translation in response to stress"/>
    <property type="evidence" value="ECO:0000314"/>
    <property type="project" value="UniProtKB"/>
</dbReference>
<dbReference type="GO" id="GO:0001556">
    <property type="term" value="P:oocyte maturation"/>
    <property type="evidence" value="ECO:0000303"/>
    <property type="project" value="UniProtKB"/>
</dbReference>
<dbReference type="GO" id="GO:0001541">
    <property type="term" value="P:ovarian follicle development"/>
    <property type="evidence" value="ECO:0000303"/>
    <property type="project" value="UniProtKB"/>
</dbReference>
<dbReference type="GO" id="GO:0001890">
    <property type="term" value="P:placenta development"/>
    <property type="evidence" value="ECO:0000303"/>
    <property type="project" value="UniProtKB"/>
</dbReference>
<dbReference type="GO" id="GO:0001938">
    <property type="term" value="P:positive regulation of endothelial cell proliferation"/>
    <property type="evidence" value="ECO:0000314"/>
    <property type="project" value="UniProtKB"/>
</dbReference>
<dbReference type="GO" id="GO:0042327">
    <property type="term" value="P:positive regulation of phosphorylation"/>
    <property type="evidence" value="ECO:0000314"/>
    <property type="project" value="UniProtKB"/>
</dbReference>
<dbReference type="GO" id="GO:0050714">
    <property type="term" value="P:positive regulation of protein secretion"/>
    <property type="evidence" value="ECO:0000314"/>
    <property type="project" value="UniProtKB"/>
</dbReference>
<dbReference type="GO" id="GO:0009725">
    <property type="term" value="P:response to hormone"/>
    <property type="evidence" value="ECO:0000314"/>
    <property type="project" value="UniProtKB"/>
</dbReference>
<dbReference type="GO" id="GO:0001666">
    <property type="term" value="P:response to hypoxia"/>
    <property type="evidence" value="ECO:0000314"/>
    <property type="project" value="UniProtKB"/>
</dbReference>
<dbReference type="GO" id="GO:0009303">
    <property type="term" value="P:rRNA transcription"/>
    <property type="evidence" value="ECO:0000314"/>
    <property type="project" value="UniProtKB"/>
</dbReference>
<dbReference type="GO" id="GO:0007165">
    <property type="term" value="P:signal transduction"/>
    <property type="evidence" value="ECO:0000314"/>
    <property type="project" value="UniProt"/>
</dbReference>
<dbReference type="GO" id="GO:0023052">
    <property type="term" value="P:signaling"/>
    <property type="evidence" value="ECO:0000314"/>
    <property type="project" value="UniProtKB"/>
</dbReference>
<dbReference type="GO" id="GO:0034063">
    <property type="term" value="P:stress granule assembly"/>
    <property type="evidence" value="ECO:0000314"/>
    <property type="project" value="UniProtKB"/>
</dbReference>
<dbReference type="GO" id="GO:0016078">
    <property type="term" value="P:tRNA decay"/>
    <property type="evidence" value="ECO:0000304"/>
    <property type="project" value="Reactome"/>
</dbReference>
<dbReference type="CDD" id="cd06265">
    <property type="entry name" value="RNase_A_canonical"/>
    <property type="match status" value="1"/>
</dbReference>
<dbReference type="FunFam" id="3.10.130.10:FF:000001">
    <property type="entry name" value="Ribonuclease pancreatic"/>
    <property type="match status" value="1"/>
</dbReference>
<dbReference type="Gene3D" id="3.10.130.10">
    <property type="entry name" value="Ribonuclease A-like domain"/>
    <property type="match status" value="1"/>
</dbReference>
<dbReference type="InterPro" id="IPR001427">
    <property type="entry name" value="RNaseA"/>
</dbReference>
<dbReference type="InterPro" id="IPR036816">
    <property type="entry name" value="RNaseA-like_dom_sf"/>
</dbReference>
<dbReference type="InterPro" id="IPR023411">
    <property type="entry name" value="RNaseA_AS"/>
</dbReference>
<dbReference type="InterPro" id="IPR023412">
    <property type="entry name" value="RNaseA_domain"/>
</dbReference>
<dbReference type="PANTHER" id="PTHR11437:SF60">
    <property type="entry name" value="ANGIOGENIN"/>
    <property type="match status" value="1"/>
</dbReference>
<dbReference type="PANTHER" id="PTHR11437">
    <property type="entry name" value="RIBONUCLEASE"/>
    <property type="match status" value="1"/>
</dbReference>
<dbReference type="Pfam" id="PF00074">
    <property type="entry name" value="RnaseA"/>
    <property type="match status" value="1"/>
</dbReference>
<dbReference type="PRINTS" id="PR00794">
    <property type="entry name" value="RIBONUCLEASE"/>
</dbReference>
<dbReference type="SMART" id="SM00092">
    <property type="entry name" value="RNAse_Pc"/>
    <property type="match status" value="1"/>
</dbReference>
<dbReference type="SUPFAM" id="SSF54076">
    <property type="entry name" value="RNase A-like"/>
    <property type="match status" value="1"/>
</dbReference>
<dbReference type="PROSITE" id="PS00127">
    <property type="entry name" value="RNASE_PANCREATIC"/>
    <property type="match status" value="1"/>
</dbReference>
<sequence length="147" mass="16550">MVMGLGVLLLVFVLGLGLTPPTLAQDNSRYTHFLTQHYDAKPQGRDDRYCESIMRRRGLTSPCKDINTFIHGNKRSIKAICENKNGNPHRENLRISKSSFQVTTCKLHGGSPWPPCQYRATAGFRNVVVACENGLPVHLDQSIFRRP</sequence>
<comment type="function">
    <text evidence="1 6 8 11 19 20 22 23 27 28 29 31 33 34 35 38 39 40 41 43 44 47 48 50 52 53 54 55 59">Secreted ribonuclease that can either promote or restrict cell proliferation of target cells, depending on the context (PubMed:12051708, PubMed:1400510, PubMed:19332886, PubMed:20129916, PubMed:21855800, PubMed:23047679, PubMed:23843625, PubMed:2424496, PubMed:2459697, PubMed:2730651, PubMed:27518564, PubMed:28176817, PubMed:29100074, PubMed:29748193, PubMed:3122207, PubMed:32510170, PubMed:38718836, PubMed:8159680, PubMed:8570639, PubMed:8622921, PubMed:9578571). Endocytosed in target cells via its receptor PLXNB2 and translocates to the cytoplasm or nucleus (PubMed:29100074, PubMed:32510170). Under stress conditions, localizes to the cytoplasm and promotes the assembly of stress granules (SGs): specifically cleaves a subset of tRNAs within anticodon loops to produce tRNA-derived stress-induced fragments (tiRNAs), resulting in translation repression and inhibition of cell proliferation (PubMed:1400510, PubMed:19332886, PubMed:20129916, PubMed:21855800, PubMed:23047679, PubMed:27518564, PubMed:29100074, PubMed:29748193, PubMed:32510170, PubMed:38718836). tiRNas also prevent formation of apoptosome, thereby promoting cell survival (By similarity). Preferentially cleaves RNAs between a pyrimidine and an adenosine residue, suggesting that it cleaves the anticodon loop of tRNA(Ala) (32-UUAGCAU-38) after positions 33 and 36 (PubMed:3289612, PubMed:38718836). Cleaves a subset of tRNAs, including tRNA(Ala), tRNA(Glu), tRNA(Gly), tRNA(Lys), tRNA(Val), tRNA(His), tRNA(Asp) and tRNA(Sec) (PubMed:31582561). Under growth conditions and in differentiated cells, translocates to the nucleus and stimulates ribosomal RNA (rRNA) transcription, including that containing the initiation site sequences of 45S rRNA, thereby promoting cell growth and proliferation (PubMed:12051708, PubMed:15735021, PubMed:27518564, PubMed:29100074, PubMed:8127865). Angiogenin induces vascularization of normal and malignant tissues via its ability to promote rRNA transcription (PubMed:19354288, PubMed:4074709, PubMed:8448182). Involved in hematopoietic stem and progenitor cell (HSPC) growth and survival by promoting rRNA transcription in growth conditions and inhibiting translation in response to stress, respectively (PubMed:27518564). Mediates the crosstalk between myeloid and intestinal epithelial cells to protect the intestinal epithelial barrier integrity: secreted by myeloid cells and promotes intestinal epithelial cells proliferation and survival (PubMed:32510170). Also mediates osteoclast-endothelial cell crosstalk in growing bone: produced by osteoclasts and protects the neighboring vascular cells against senescence by promoting rRNA transcription (By similarity).</text>
</comment>
<comment type="activity regulation">
    <text evidence="19 20 28 42 43 47 52 55 59">Has weak tRNA ribonuclease activity by itself due to partial autoinhibition by its C-terminus (residues 140-147), which folds into a short alpha-helix that partially occludes the substrate-binding site (PubMed:38718836, PubMed:8159680, PubMed:8622921, PubMed:9578571). In absence of stress, the ribonuclease activity is inhibited by RNH1 in the cytoplasm (PubMed:19332886, PubMed:19354288, PubMed:23843625, PubMed:3243277, PubMed:32510170, PubMed:38718836). In response to stress, dissociates from RNH1 in the cytoplasm and associates with cytoplasmic ribosomes with vacant A-sites: ribosomes directly activate the tRNA ribonuclease activity of ANG by refolding the C-terminal alpha-helix (PubMed:38718836). In response to stress, the angiogenic activity of ANG is inhibited by RNH1 in the nucleus (PubMed:23843625).</text>
</comment>
<comment type="subunit">
    <text evidence="2 19 20 28 32 34 42 43 46 57">Homodimer (PubMed:25372031). Interacts with RNH1; inhibiting ANG ribonuclease activity (PubMed:10413501, PubMed:19332886, PubMed:19354288, PubMed:23843625, PubMed:27518564, PubMed:3243277, PubMed:32510170, PubMed:9311977). Interacts with PCNA (PubMed:37218877).</text>
</comment>
<comment type="interaction">
    <interactant intactId="EBI-525291">
        <id>P03950</id>
    </interactant>
    <interactant intactId="EBI-77797">
        <id>P35609</id>
        <label>ACTN2</label>
    </interactant>
    <organismsDiffer>false</organismsDiffer>
    <experiments>4</experiments>
</comment>
<comment type="interaction">
    <interactant intactId="EBI-525291">
        <id>P03950</id>
    </interactant>
    <interactant intactId="EBI-1571188">
        <id>P19883</id>
        <label>FST</label>
    </interactant>
    <organismsDiffer>false</organismsDiffer>
    <experiments>3</experiments>
</comment>
<comment type="interaction">
    <interactant intactId="EBI-525291">
        <id>P03950</id>
    </interactant>
    <interactant intactId="EBI-358311">
        <id>P12004</id>
        <label>PCNA</label>
    </interactant>
    <organismsDiffer>false</organismsDiffer>
    <experiments>4</experiments>
</comment>
<comment type="interaction">
    <interactant intactId="EBI-525291">
        <id>P03950</id>
    </interactant>
    <interactant intactId="EBI-716505">
        <id>Q03405</id>
        <label>PLAUR</label>
    </interactant>
    <organismsDiffer>false</organismsDiffer>
    <experiments>5</experiments>
</comment>
<comment type="interaction">
    <interactant intactId="EBI-525291">
        <id>P03950</id>
    </interactant>
    <interactant intactId="EBI-1237106">
        <id>P13489</id>
        <label>RNH1</label>
    </interactant>
    <organismsDiffer>false</organismsDiffer>
    <experiments>6</experiments>
</comment>
<comment type="subcellular location">
    <subcellularLocation>
        <location evidence="27 39 45">Secreted</location>
    </subcellularLocation>
    <subcellularLocation>
        <location evidence="6 11 27 28 32 38 50">Nucleus</location>
    </subcellularLocation>
    <subcellularLocation>
        <location evidence="6 49">Nucleus</location>
        <location evidence="6 49">Nucleolus</location>
    </subcellularLocation>
    <subcellularLocation>
        <location evidence="28 34 38">Cytoplasm</location>
        <location evidence="28 34 38">Stress granule</location>
    </subcellularLocation>
    <text evidence="6 38">The secreted protein is rapidly endocytosed by target cells following interaction with PLXNB2 receptor and translocated to the cytoplasm and nucleus (PubMed:29100074). In the nucleus, accumulates in the nucleolus and binds to DNA (PubMed:12051708).</text>
</comment>
<comment type="tissue specificity">
    <text evidence="14 30">Expressed predominantly in the liver (PubMed:2440105). Also detected in endothelial cells and spinal cord neurons (PubMed:17886298, PubMed:2440105).</text>
</comment>
<comment type="developmental stage">
    <text evidence="30">Low level expression in the developing fetus, increased in the neonate, and maximal in the adult.</text>
</comment>
<comment type="disease" evidence="10 12 13 14 15 16 17 18 19 21 24 25 26 32 39 47">
    <disease id="DI-00113">
        <name>Amyotrophic lateral sclerosis 9</name>
        <acronym>ALS9</acronym>
        <description>A neurodegenerative disorder affecting upper motor neurons in the brain and lower motor neurons in the brain stem and spinal cord, resulting in fatal paralysis. Sensory abnormalities are absent. The pathologic hallmarks of the disease include pallor of the corticospinal tract due to loss of motor neurons, presence of ubiquitin-positive inclusions within surviving motor neurons, and deposition of pathologic aggregates. The etiology of amyotrophic lateral sclerosis is likely to be multifactorial, involving both genetic and environmental factors. The disease is inherited in 5-10% of the cases.</description>
        <dbReference type="MIM" id="611895"/>
    </disease>
    <text>Disease susceptibility is associated with variants affecting the gene represented in this entry.</text>
</comment>
<comment type="similarity">
    <text evidence="63">Belongs to the pancreatic ribonuclease family.</text>
</comment>
<comment type="sequence caution" evidence="63">
    <conflict type="erroneous initiation">
        <sequence resource="EMBL-CDS" id="AAH20704"/>
    </conflict>
    <text>Truncated N-terminus.</text>
</comment>
<comment type="online information" name="Functional Glycomics Gateway - Glycan Binding">
    <link uri="http://www.functionalglycomics.org/glycomics/GBPServlet?&amp;operationType=view&amp;cbpId=cbp_hum_other_803"/>
    <text>Angiogenin</text>
</comment>
<comment type="online information" name="Atlas of Genetics and Cytogenetics in Oncology and Haematology">
    <link uri="https://atlasgeneticsoncology.org/gene/635/ANG"/>
</comment>
<organism>
    <name type="scientific">Homo sapiens</name>
    <name type="common">Human</name>
    <dbReference type="NCBI Taxonomy" id="9606"/>
    <lineage>
        <taxon>Eukaryota</taxon>
        <taxon>Metazoa</taxon>
        <taxon>Chordata</taxon>
        <taxon>Craniata</taxon>
        <taxon>Vertebrata</taxon>
        <taxon>Euteleostomi</taxon>
        <taxon>Mammalia</taxon>
        <taxon>Eutheria</taxon>
        <taxon>Euarchontoglires</taxon>
        <taxon>Primates</taxon>
        <taxon>Haplorrhini</taxon>
        <taxon>Catarrhini</taxon>
        <taxon>Hominidae</taxon>
        <taxon>Homo</taxon>
    </lineage>
</organism>
<keyword id="KW-0002">3D-structure</keyword>
<keyword id="KW-0036">Amyotrophic lateral sclerosis</keyword>
<keyword id="KW-0037">Angiogenesis</keyword>
<keyword id="KW-0963">Cytoplasm</keyword>
<keyword id="KW-0217">Developmental protein</keyword>
<keyword id="KW-0221">Differentiation</keyword>
<keyword id="KW-0903">Direct protein sequencing</keyword>
<keyword id="KW-0225">Disease variant</keyword>
<keyword id="KW-1015">Disulfide bond</keyword>
<keyword id="KW-0238">DNA-binding</keyword>
<keyword id="KW-0255">Endonuclease</keyword>
<keyword id="KW-0378">Hydrolase</keyword>
<keyword id="KW-0523">Neurodegeneration</keyword>
<keyword id="KW-0540">Nuclease</keyword>
<keyword id="KW-0539">Nucleus</keyword>
<keyword id="KW-0652">Protein synthesis inhibitor</keyword>
<keyword id="KW-1267">Proteomics identification</keyword>
<keyword id="KW-0873">Pyrrolidone carboxylic acid</keyword>
<keyword id="KW-1185">Reference proteome</keyword>
<keyword id="KW-0964">Secreted</keyword>
<keyword id="KW-0732">Signal</keyword>
<keyword id="KW-0346">Stress response</keyword>
<protein>
    <recommendedName>
        <fullName evidence="62">Angiogenin</fullName>
        <ecNumber evidence="8 23 29 31 35 47">3.1.27.-</ecNumber>
    </recommendedName>
    <alternativeName>
        <fullName>Ribonuclease 5</fullName>
        <shortName>RNase 5</shortName>
    </alternativeName>
</protein>
<name>ANGI_HUMAN</name>